<name>UHRF1_HUMAN</name>
<organism>
    <name type="scientific">Homo sapiens</name>
    <name type="common">Human</name>
    <dbReference type="NCBI Taxonomy" id="9606"/>
    <lineage>
        <taxon>Eukaryota</taxon>
        <taxon>Metazoa</taxon>
        <taxon>Chordata</taxon>
        <taxon>Craniata</taxon>
        <taxon>Vertebrata</taxon>
        <taxon>Euteleostomi</taxon>
        <taxon>Mammalia</taxon>
        <taxon>Eutheria</taxon>
        <taxon>Euarchontoglires</taxon>
        <taxon>Primates</taxon>
        <taxon>Haplorrhini</taxon>
        <taxon>Catarrhini</taxon>
        <taxon>Hominidae</taxon>
        <taxon>Homo</taxon>
    </lineage>
</organism>
<gene>
    <name type="primary">UHRF1</name>
    <name type="synonym">ICBP90</name>
    <name type="synonym">NP95</name>
    <name type="synonym">RNF106</name>
</gene>
<proteinExistence type="evidence at protein level"/>
<protein>
    <recommendedName>
        <fullName>E3 ubiquitin-protein ligase UHRF1</fullName>
        <ecNumber evidence="34">2.3.2.27</ecNumber>
    </recommendedName>
    <alternativeName>
        <fullName>Inverted CCAAT box-binding protein of 90 kDa</fullName>
    </alternativeName>
    <alternativeName>
        <fullName>Nuclear protein 95</fullName>
    </alternativeName>
    <alternativeName>
        <fullName>Nuclear zinc finger protein Np95</fullName>
        <shortName>HuNp95</shortName>
        <shortName>hNp95</shortName>
    </alternativeName>
    <alternativeName>
        <fullName>RING finger protein 106</fullName>
    </alternativeName>
    <alternativeName>
        <fullName>RING-type E3 ubiquitin transferase UHRF1</fullName>
    </alternativeName>
    <alternativeName>
        <fullName>Transcription factor ICBP90</fullName>
    </alternativeName>
    <alternativeName>
        <fullName>Ubiquitin-like PHD and RING finger domain-containing protein 1</fullName>
        <shortName>hUHRF1</shortName>
    </alternativeName>
    <alternativeName>
        <fullName>Ubiquitin-like-containing PHD and RING finger domains protein 1</fullName>
    </alternativeName>
</protein>
<accession>Q96T88</accession>
<accession>A0JBR2</accession>
<accession>A8K024</accession>
<accession>B2RBA9</accession>
<accession>Q2HIX7</accession>
<accession>Q8J022</accession>
<accession>Q9H6S6</accession>
<accession>Q9P115</accession>
<accession>Q9P1U7</accession>
<evidence type="ECO:0000250" key="1"/>
<evidence type="ECO:0000250" key="2">
    <source>
        <dbReference type="UniProtKB" id="Q7TPK1"/>
    </source>
</evidence>
<evidence type="ECO:0000250" key="3">
    <source>
        <dbReference type="UniProtKB" id="Q8VDF2"/>
    </source>
</evidence>
<evidence type="ECO:0000255" key="4">
    <source>
        <dbReference type="PROSITE-ProRule" id="PRU00146"/>
    </source>
</evidence>
<evidence type="ECO:0000255" key="5">
    <source>
        <dbReference type="PROSITE-ProRule" id="PRU00175"/>
    </source>
</evidence>
<evidence type="ECO:0000255" key="6">
    <source>
        <dbReference type="PROSITE-ProRule" id="PRU00214"/>
    </source>
</evidence>
<evidence type="ECO:0000255" key="7">
    <source>
        <dbReference type="PROSITE-ProRule" id="PRU00358"/>
    </source>
</evidence>
<evidence type="ECO:0000256" key="8">
    <source>
        <dbReference type="SAM" id="MobiDB-lite"/>
    </source>
</evidence>
<evidence type="ECO:0000269" key="9">
    <source>
    </source>
</evidence>
<evidence type="ECO:0000269" key="10">
    <source>
    </source>
</evidence>
<evidence type="ECO:0000269" key="11">
    <source>
    </source>
</evidence>
<evidence type="ECO:0000269" key="12">
    <source>
    </source>
</evidence>
<evidence type="ECO:0000269" key="13">
    <source>
    </source>
</evidence>
<evidence type="ECO:0000269" key="14">
    <source>
    </source>
</evidence>
<evidence type="ECO:0000269" key="15">
    <source>
    </source>
</evidence>
<evidence type="ECO:0000269" key="16">
    <source>
    </source>
</evidence>
<evidence type="ECO:0000269" key="17">
    <source>
    </source>
</evidence>
<evidence type="ECO:0000269" key="18">
    <source>
    </source>
</evidence>
<evidence type="ECO:0000269" key="19">
    <source>
    </source>
</evidence>
<evidence type="ECO:0000269" key="20">
    <source>
    </source>
</evidence>
<evidence type="ECO:0000269" key="21">
    <source>
    </source>
</evidence>
<evidence type="ECO:0000269" key="22">
    <source>
    </source>
</evidence>
<evidence type="ECO:0000269" key="23">
    <source>
    </source>
</evidence>
<evidence type="ECO:0000269" key="24">
    <source>
    </source>
</evidence>
<evidence type="ECO:0000269" key="25">
    <source>
    </source>
</evidence>
<evidence type="ECO:0000269" key="26">
    <source>
    </source>
</evidence>
<evidence type="ECO:0000269" key="27">
    <source>
    </source>
</evidence>
<evidence type="ECO:0000269" key="28">
    <source>
    </source>
</evidence>
<evidence type="ECO:0000269" key="29">
    <source>
    </source>
</evidence>
<evidence type="ECO:0000269" key="30">
    <source>
    </source>
</evidence>
<evidence type="ECO:0000269" key="31">
    <source>
    </source>
</evidence>
<evidence type="ECO:0000269" key="32">
    <source>
    </source>
</evidence>
<evidence type="ECO:0000269" key="33">
    <source>
    </source>
</evidence>
<evidence type="ECO:0000269" key="34">
    <source>
    </source>
</evidence>
<evidence type="ECO:0000269" key="35">
    <source ref="6"/>
</evidence>
<evidence type="ECO:0000303" key="36">
    <source>
    </source>
</evidence>
<evidence type="ECO:0000305" key="37"/>
<evidence type="ECO:0007744" key="38">
    <source>
    </source>
</evidence>
<evidence type="ECO:0007744" key="39">
    <source>
    </source>
</evidence>
<evidence type="ECO:0007744" key="40">
    <source>
    </source>
</evidence>
<evidence type="ECO:0007744" key="41">
    <source>
    </source>
</evidence>
<evidence type="ECO:0007744" key="42">
    <source>
    </source>
</evidence>
<evidence type="ECO:0007744" key="43">
    <source>
    </source>
</evidence>
<evidence type="ECO:0007744" key="44">
    <source>
    </source>
</evidence>
<evidence type="ECO:0007744" key="45">
    <source>
    </source>
</evidence>
<evidence type="ECO:0007744" key="46">
    <source>
    </source>
</evidence>
<evidence type="ECO:0007744" key="47">
    <source>
    </source>
</evidence>
<evidence type="ECO:0007744" key="48">
    <source>
    </source>
</evidence>
<evidence type="ECO:0007829" key="49">
    <source>
        <dbReference type="PDB" id="2FAZ"/>
    </source>
</evidence>
<evidence type="ECO:0007829" key="50">
    <source>
        <dbReference type="PDB" id="2L3R"/>
    </source>
</evidence>
<evidence type="ECO:0007829" key="51">
    <source>
        <dbReference type="PDB" id="2LGG"/>
    </source>
</evidence>
<evidence type="ECO:0007829" key="52">
    <source>
        <dbReference type="PDB" id="2LGL"/>
    </source>
</evidence>
<evidence type="ECO:0007829" key="53">
    <source>
        <dbReference type="PDB" id="3ASK"/>
    </source>
</evidence>
<evidence type="ECO:0007829" key="54">
    <source>
        <dbReference type="PDB" id="3ASL"/>
    </source>
</evidence>
<evidence type="ECO:0007829" key="55">
    <source>
        <dbReference type="PDB" id="3BI7"/>
    </source>
</evidence>
<evidence type="ECO:0007829" key="56">
    <source>
        <dbReference type="PDB" id="3CLZ"/>
    </source>
</evidence>
<evidence type="ECO:0007829" key="57">
    <source>
        <dbReference type="PDB" id="3DWH"/>
    </source>
</evidence>
<evidence type="ECO:0007829" key="58">
    <source>
        <dbReference type="PDB" id="3FL2"/>
    </source>
</evidence>
<evidence type="ECO:0007829" key="59">
    <source>
        <dbReference type="PDB" id="6W92"/>
    </source>
</evidence>
<evidence type="ECO:0007829" key="60">
    <source>
        <dbReference type="PDB" id="7FB7"/>
    </source>
</evidence>
<evidence type="ECO:0007829" key="61">
    <source>
        <dbReference type="PDB" id="8XV4"/>
    </source>
</evidence>
<comment type="function">
    <text evidence="9 12 14 15 16 19 23 24 31 32 34">Multidomain protein that acts as a key epigenetic regulator by bridging DNA methylation and chromatin modification. Specifically recognizes and binds hemimethylated DNA at replication forks via its YDG domain and recruits DNMT1 methyltransferase to ensure faithful propagation of the DNA methylation patterns through DNA replication. In addition to its role in maintenance of DNA methylation, also plays a key role in chromatin modification: through its tudor-like regions and PHD-type zinc fingers, specifically recognizes and binds histone H3 trimethylated at 'Lys-9' (H3K9me3) and unmethylated at 'Arg-2' (H3R2me0), respectively, and recruits chromatin proteins. Enriched in pericentric heterochromatin where it recruits different chromatin modifiers required for this chromatin replication. Also localizes to euchromatic regions where it negatively regulates transcription possibly by impacting DNA methylation and histone modifications. Has E3 ubiquitin-protein ligase activity by mediating the ubiquitination of target proteins such as histone H3 and PML. It is still unclear how E3 ubiquitin-protein ligase activity is related to its role in chromatin in vivo. Plays a role in DNA repair by cooperating with UHRF2 to ensure recruitment of FANCD2 to interstrand cross-links (ICLs) leading to FANCD2 activation. Acts as a critical player of proper spindle architecture by catalyzing the 'Lys-63'-linked ubiquitination of KIF11, thereby controlling KIF11 localization on the spindle (PubMed:37728657).</text>
</comment>
<comment type="catalytic activity">
    <reaction evidence="34">
        <text>S-ubiquitinyl-[E2 ubiquitin-conjugating enzyme]-L-cysteine + [acceptor protein]-L-lysine = [E2 ubiquitin-conjugating enzyme]-L-cysteine + N(6)-ubiquitinyl-[acceptor protein]-L-lysine.</text>
        <dbReference type="EC" id="2.3.2.27"/>
    </reaction>
</comment>
<comment type="pathway">
    <text>Protein modification; protein ubiquitination.</text>
</comment>
<comment type="subunit">
    <text evidence="1 3 14 15 17 19 23 24 28 29 30 31 32 33">Interacts with DNMT3A and DNMT3B (By similarity). Interacts with DNMT1; the interaction is direct. Interacts with USP7; leading to its deubiquitination. Interacts with histone H3. Interacts with HDAC1, but not with HDAC2. Interacts with BLTP3A. Interacts with PML. Interacts with EHMT2. Binds hemimethylated CpG containing oligonucleotides. Interacts with ZNF263; recruited to the SIX3 promoter along with other proteins involved in chromatin modification and transcriptional corepression where it contributes to transcriptional repression (PubMed:32051553). Interacts with UHRF2 (PubMed:30335751). Interacts with FANCD2 (PubMed:30335751). Interacts with TET1 isoform 2; this interaction induces the recruitment of TET1 isoform 2 to replicating heterochromatin (By similarity).</text>
</comment>
<comment type="interaction">
    <interactant intactId="EBI-1548946">
        <id>Q96T88</id>
    </interactant>
    <interactant intactId="EBI-719459">
        <id>P26358</id>
        <label>DNMT1</label>
    </interactant>
    <organismsDiffer>false</organismsDiffer>
    <experiments>12</experiments>
</comment>
<comment type="interaction">
    <interactant intactId="EBI-1548946">
        <id>Q96T88</id>
    </interactant>
    <interactant intactId="EBI-923653">
        <id>Q9Y6K1</id>
        <label>DNMT3A</label>
    </interactant>
    <organismsDiffer>false</organismsDiffer>
    <experiments>7</experiments>
</comment>
<comment type="interaction">
    <interactant intactId="EBI-1548946">
        <id>Q96T88</id>
    </interactant>
    <interactant intactId="EBI-80125">
        <id>Q9UBC3</id>
        <label>DNMT3B</label>
    </interactant>
    <organismsDiffer>false</organismsDiffer>
    <experiments>7</experiments>
</comment>
<comment type="subcellular location">
    <subcellularLocation>
        <location evidence="7 9 15 16 19 24 32">Nucleus</location>
    </subcellularLocation>
    <text evidence="3">Associated, through the YDG domain (also called SRA domain), with replicating DNA from early to late S phase, including at replicating pericentric heterochromatin (By similarity). Also localizes to euchromatic regions. In non-S-phase cells, homogenously distributed through the nucleus (By similarity).</text>
</comment>
<comment type="alternative products">
    <event type="alternative splicing"/>
    <isoform>
        <id>Q96T88-1</id>
        <name>1</name>
        <sequence type="displayed"/>
    </isoform>
    <isoform>
        <id>Q96T88-2</id>
        <name>2</name>
        <sequence type="described" ref="VSP_044394"/>
    </isoform>
</comment>
<comment type="tissue specificity">
    <text evidence="9 10 14">Expressed in thymus, bone marrow, testis, lung and heart. Overexpressed in breast cancer.</text>
</comment>
<comment type="developmental stage">
    <text evidence="9">Expressed in fetal thymus, liver and kidney.</text>
</comment>
<comment type="induction">
    <text evidence="9 10 12 14">Up-regulated in proliferating cells, and down-regulated in quiescent cells. Down-regulated upon adriamycin-induced DNA damage, in a p53/TP53 and CDKN1A-dependent way. Induced by E2F1 transcription factor.</text>
</comment>
<comment type="domain">
    <text evidence="30">The tudor-like regions specifically recognize and bind histone H3 unmethylated at 'Arg-2' (H3R2me0), while the PHD-type zinc finger specifically recognizes and binds histone H3 trimethylated at 'Lys-9' (H3K9me3). The tudor-like regions simultaneously recognizes H3K9me3 through a conserved aromatic cage in the first tudor-like subdomain and unmodified H3K4 (H3K4me0) within a groove between the tandem subdomains (PubMed:21489993, PubMed:21777816, PubMed:22100450). The linker region plays a role in the formation of a histone H3-binding hole between the reader modules formed by the tudor-like regions and the PHD-type zinc finger by making extended contacts with the tandem tudor-like regions (PubMed:22837395).</text>
</comment>
<comment type="domain">
    <text evidence="15 17 22">The YDG domain (also named SRA domain) specifically recognizes and binds hemimethylated DNA at replication forks (DNA that is only methylated on the mother strand of replicating DNA) (PubMed:17673620). It contains a binding pocket that accommodates the 5-methylcytosine that is flipped out of the duplex DNA. 2 specialized loops reach through the resulting gap in the DNA from both the major and the minor grooves to read the other 3 bases of the CpG duplex. The major groove loop confers both specificity for the CpG dinucleotide and discrimination against methylation of deoxycytidine of the complementary strand (PubMed:18772889). The YDG domain also recognizes and binds 5-hydroxymethylcytosine (5hmC) (PubMed:21731699).</text>
</comment>
<comment type="domain">
    <text evidence="1">The RING finger is required for ubiquitin ligase activity.</text>
</comment>
<comment type="PTM">
    <text evidence="13 29 30">Phosphorylation at Ser-298 of the linker region decreases the binding to H3K9me3. Phosphorylation at Ser-639 by CDK1 during M phase impairs interaction with USP7, preventing deubiquitination and leading to degradation by the proteasome.</text>
</comment>
<comment type="PTM">
    <text evidence="12 16 23 29">Ubiquitinated; which leads to proteasomal degradation. Autoubiquitinated; interaction with USP7 leads to deubiquitination and prevents degradation. Ubiquitination and degradation takes place during M phase, when phosphorylation at Ser-639 prevents interaction with USP7 and subsequent deubiquitination. Polyubiquitination may be stimulated by DNA damage.</text>
</comment>
<comment type="disease">
    <text>Defects in UHRF1 may be a cause of cancers. Overexpressed in many different forms of human cancers, including bladder, breast, cervical, colorectal and prostate cancers, as well as pancreatic adenocarcinomas, rhabdomyosarcomas and gliomas. Plays an important role in the correlation of histone modification and gene silencing in cancer progression. Expression is associated with a poor prognosis in patients with various cancers, suggesting that it participates in cancer progression.</text>
</comment>
<comment type="sequence caution" evidence="37">
    <conflict type="erroneous initiation">
        <sequence resource="EMBL-CDS" id="BAB15177"/>
    </conflict>
    <text>Truncated N-terminus.</text>
</comment>
<feature type="chain" id="PRO_0000056144" description="E3 ubiquitin-protein ligase UHRF1">
    <location>
        <begin position="1"/>
        <end position="793"/>
    </location>
</feature>
<feature type="domain" description="Ubiquitin-like" evidence="6">
    <location>
        <begin position="1"/>
        <end position="78"/>
    </location>
</feature>
<feature type="domain" description="YDG" evidence="7">
    <location>
        <begin position="419"/>
        <end position="582"/>
    </location>
</feature>
<feature type="zinc finger region" description="PHD-type" evidence="4">
    <location>
        <begin position="310"/>
        <end position="366"/>
    </location>
</feature>
<feature type="zinc finger region" description="RING-type" evidence="5">
    <location>
        <begin position="724"/>
        <end position="763"/>
    </location>
</feature>
<feature type="region of interest" description="Disordered" evidence="8">
    <location>
        <begin position="82"/>
        <end position="124"/>
    </location>
</feature>
<feature type="region of interest" description="Tudor-like 1">
    <location>
        <begin position="133"/>
        <end position="209"/>
    </location>
</feature>
<feature type="region of interest" description="Tudor-like 2">
    <location>
        <begin position="216"/>
        <end position="283"/>
    </location>
</feature>
<feature type="region of interest" description="Linker">
    <location>
        <begin position="296"/>
        <end position="301"/>
    </location>
</feature>
<feature type="region of interest" description="Histone H3R2me0 binding">
    <location>
        <begin position="333"/>
        <end position="337"/>
    </location>
</feature>
<feature type="region of interest" description="Histone H3R2me0 binding">
    <location>
        <begin position="353"/>
        <end position="355"/>
    </location>
</feature>
<feature type="region of interest" description="Required to promote base flipping" evidence="1">
    <location>
        <begin position="445"/>
        <end position="446"/>
    </location>
</feature>
<feature type="region of interest" description="Required for formation of a 5-methylcytosine-binding pocket">
    <location>
        <begin position="466"/>
        <end position="469"/>
    </location>
</feature>
<feature type="region of interest" description="Required for formation of a 5-methylcytosine-binding pocket">
    <location>
        <begin position="478"/>
        <end position="481"/>
    </location>
</feature>
<feature type="region of interest" description="Disordered" evidence="8">
    <location>
        <begin position="618"/>
        <end position="673"/>
    </location>
</feature>
<feature type="compositionally biased region" description="Basic and acidic residues" evidence="8">
    <location>
        <begin position="618"/>
        <end position="629"/>
    </location>
</feature>
<feature type="binding site">
    <location>
        <begin position="463"/>
        <end position="464"/>
    </location>
    <ligand>
        <name>DNA</name>
        <dbReference type="ChEBI" id="CHEBI:16991"/>
    </ligand>
    <ligandPart>
        <name>5-methylcytosine group</name>
        <dbReference type="ChEBI" id="CHEBI:65274"/>
    </ligandPart>
</feature>
<feature type="binding site">
    <location>
        <position position="469"/>
    </location>
    <ligand>
        <name>DNA</name>
        <dbReference type="ChEBI" id="CHEBI:16991"/>
    </ligand>
    <ligandPart>
        <name>5-methylcytosine group</name>
        <dbReference type="ChEBI" id="CHEBI:65274"/>
    </ligandPart>
</feature>
<feature type="site" description="Histone H3K4me0 binding">
    <location>
        <position position="316"/>
    </location>
</feature>
<feature type="site" description="Histone H3R2me0 binding">
    <location>
        <position position="327"/>
    </location>
</feature>
<feature type="site" description="Histone H3R2me0 binding">
    <location>
        <position position="330"/>
    </location>
</feature>
<feature type="site" description="Required to confer preferential recognition of cytosine over thymine">
    <location>
        <position position="479"/>
    </location>
</feature>
<feature type="site" description="Required to discriminate between hemimethylated DNA versus symmetrically methylated DNA">
    <location>
        <position position="489"/>
    </location>
</feature>
<feature type="site" description="Required for affinity and specificity for 5-mCpG sequence">
    <location>
        <position position="491"/>
    </location>
</feature>
<feature type="modified residue" description="Phosphoserine" evidence="41 44 46">
    <location>
        <position position="76"/>
    </location>
</feature>
<feature type="modified residue" description="Phosphoserine" evidence="41 46">
    <location>
        <position position="91"/>
    </location>
</feature>
<feature type="modified residue" description="Phosphoserine" evidence="2">
    <location>
        <position position="95"/>
    </location>
</feature>
<feature type="modified residue" description="Phosphoserine" evidence="3">
    <location>
        <position position="165"/>
    </location>
</feature>
<feature type="modified residue" description="Phosphoserine" evidence="39 40 43 44 45 46">
    <location>
        <position position="287"/>
    </location>
</feature>
<feature type="modified residue" description="Phosphoserine; by PKA" evidence="13 30">
    <location>
        <position position="298"/>
    </location>
</feature>
<feature type="modified residue" description="Phosphoserine" evidence="46">
    <location>
        <position position="368"/>
    </location>
</feature>
<feature type="modified residue" description="N6-acetyllysine" evidence="42">
    <location>
        <position position="399"/>
    </location>
</feature>
<feature type="modified residue" description="N6-acetyllysine; alternate" evidence="42">
    <location>
        <position position="546"/>
    </location>
</feature>
<feature type="modified residue" description="Phosphoserine; by CDK1" evidence="29 38 39 44 46">
    <location>
        <position position="639"/>
    </location>
</feature>
<feature type="modified residue" description="Phosphoserine" evidence="45">
    <location>
        <position position="651"/>
    </location>
</feature>
<feature type="modified residue" description="Phosphoserine" evidence="41 44 46">
    <location>
        <position position="707"/>
    </location>
</feature>
<feature type="modified residue" description="Phosphoserine" evidence="46">
    <location>
        <position position="709"/>
    </location>
</feature>
<feature type="cross-link" description="Glycyl lysine isopeptide (Lys-Gly) (interchain with G-Cter in SUMO2)" evidence="48">
    <location>
        <position position="279"/>
    </location>
</feature>
<feature type="cross-link" description="Glycyl lysine isopeptide (Lys-Gly) (interchain with G-Cter in SUMO2)" evidence="47">
    <location>
        <position position="385"/>
    </location>
</feature>
<feature type="cross-link" description="Glycyl lysine isopeptide (Lys-Gly) (interchain with G-Cter in SUMO2); alternate" evidence="47">
    <location>
        <position position="546"/>
    </location>
</feature>
<feature type="cross-link" description="Glycyl lysine isopeptide (Lys-Gly) (interchain with G-Cter in SUMO2)" evidence="47 48">
    <location>
        <position position="670"/>
    </location>
</feature>
<feature type="splice variant" id="VSP_044394" description="In isoform 2." evidence="36">
    <original>M</original>
    <variation>MGVFAVPPLSSDTM</variation>
    <location>
        <position position="1"/>
    </location>
</feature>
<feature type="sequence variant" id="VAR_022554" description="In dbSNP:rs17886098." evidence="35">
    <original>D</original>
    <variation>H</variation>
    <location>
        <position position="240"/>
    </location>
</feature>
<feature type="sequence variant" id="VAR_022555" description="In dbSNP:rs17885791." evidence="11 35">
    <original>E</original>
    <variation>K</variation>
    <location>
        <position position="379"/>
    </location>
</feature>
<feature type="sequence variant" id="VAR_022556" description="In dbSNP:rs2307209." evidence="11 35">
    <original>A</original>
    <variation>T</variation>
    <location>
        <position position="638"/>
    </location>
</feature>
<feature type="sequence variant" id="VAR_022557" description="In dbSNP:rs17884843." evidence="35">
    <original>T</original>
    <variation>M</variation>
    <location>
        <position position="642"/>
    </location>
</feature>
<feature type="sequence variant" id="VAR_022558" description="In dbSNP:rs17883563." evidence="35">
    <original>L</original>
    <variation>F</variation>
    <location>
        <position position="713"/>
    </location>
</feature>
<feature type="mutagenesis site" description="Impaired binding to histone H3 without affecting the protein folding; when associated with A-153." evidence="21">
    <original>D</original>
    <variation>A</variation>
    <location>
        <position position="142"/>
    </location>
</feature>
<feature type="mutagenesis site" description="Impaired binding to histone H3." evidence="21">
    <original>D</original>
    <variation>A</variation>
    <location>
        <position position="145"/>
    </location>
</feature>
<feature type="mutagenesis site" description="Impaired binding to histone H3." evidence="21">
    <original>F</original>
    <variation>A</variation>
    <location>
        <position position="152"/>
    </location>
</feature>
<feature type="mutagenesis site" description="Impaired binding to histone H3 without affecting the protein folding; when associated with A-142." evidence="21">
    <original>E</original>
    <variation>A</variation>
    <location>
        <position position="153"/>
    </location>
</feature>
<feature type="mutagenesis site" description="Impaired binding to histone H3." evidence="20 21">
    <original>Y</original>
    <variation>A</variation>
    <location>
        <position position="188"/>
    </location>
</feature>
<feature type="mutagenesis site" description="Slightly impaired binding to histone H3." evidence="21">
    <original>D</original>
    <variation>A</variation>
    <location>
        <position position="190"/>
    </location>
</feature>
<feature type="mutagenesis site" description="Impaired binding to histone H3." evidence="20">
    <original>Y</original>
    <variation>A</variation>
    <location>
        <position position="191"/>
    </location>
</feature>
<feature type="mutagenesis site" description="Disrupts the simultaneous binding to H3R2me0 and H3K9me3." evidence="30">
    <original>RR</original>
    <variation>AA</variation>
    <location>
        <begin position="295"/>
        <end position="296"/>
    </location>
</feature>
<feature type="mutagenesis site" description="Diminishes phosphorylation by PKA." evidence="13">
    <original>S</original>
    <variation>A</variation>
    <location>
        <position position="298"/>
    </location>
</feature>
<feature type="mutagenesis site" description="Does not affect ability to bind histone H3 peptide." evidence="27">
    <original>Q</original>
    <variation>A</variation>
    <variation>K</variation>
    <location>
        <position position="330"/>
    </location>
</feature>
<feature type="mutagenesis site" description="Abolishes binding to histone H3." evidence="24">
    <original>DE</original>
    <variation>AA</variation>
    <location>
        <begin position="334"/>
        <end position="335"/>
    </location>
</feature>
<feature type="mutagenesis site" description="Impaired binding to histone H3." evidence="25 26 27">
    <original>D</original>
    <variation>A</variation>
    <location>
        <position position="334"/>
    </location>
</feature>
<feature type="mutagenesis site" description="Impaired binding to histone H3." evidence="25 26 27">
    <original>D</original>
    <variation>A</variation>
    <location>
        <position position="337"/>
    </location>
</feature>
<feature type="mutagenesis site" description="Does not affect ability to bind DNA." evidence="18">
    <original>R</original>
    <variation>A</variation>
    <location>
        <position position="433"/>
    </location>
</feature>
<feature type="mutagenesis site" description="Decreased ability to bind DNA." evidence="18">
    <original>R</original>
    <variation>A</variation>
    <location>
        <position position="443"/>
    </location>
</feature>
<feature type="mutagenesis site" description="Decreased affinity for DNA." evidence="17">
    <original>G</original>
    <variation>D</variation>
    <location>
        <position position="448"/>
    </location>
</feature>
<feature type="mutagenesis site" description="Decreased ability to bind DNA." evidence="18">
    <original>Y</original>
    <variation>G</variation>
    <location>
        <position position="466"/>
    </location>
</feature>
<feature type="mutagenesis site" description="Abolishes ability to bind hemimethylated DNA." evidence="17">
    <original>D</original>
    <variation>G</variation>
    <location>
        <position position="469"/>
    </location>
</feature>
<feature type="mutagenesis site" description="Abolishes specificity to hemimethylated DNA." evidence="17">
    <original>N</original>
    <variation>A</variation>
    <location>
        <position position="489"/>
    </location>
</feature>
<feature type="mutagenesis site" description="Decreased binding to methylated DNA but does not affect ability to bind DNA." evidence="17 18">
    <original>R</original>
    <variation>A</variation>
    <location>
        <position position="491"/>
    </location>
</feature>
<feature type="mutagenesis site" description="Prevents phosphorylation by CDK1 during M phase, leading to increased stability." evidence="29">
    <original>S</original>
    <variation>A</variation>
    <location>
        <position position="639"/>
    </location>
</feature>
<feature type="mutagenesis site" description="Mimics phosphorylation; impaired interaction with USP7, leading to decreased stability." evidence="29">
    <original>S</original>
    <variation>D</variation>
    <location>
        <position position="639"/>
    </location>
</feature>
<feature type="mutagenesis site" description="No effect on in vitro phosphorylation by PKA." evidence="13">
    <original>S</original>
    <variation>A</variation>
    <location>
        <position position="651"/>
    </location>
</feature>
<feature type="mutagenesis site" description="No effect on in vitro phosphorylation by PKA." evidence="13">
    <original>S</original>
    <variation>A</variation>
    <location>
        <position position="666"/>
    </location>
</feature>
<feature type="mutagenesis site" description="Abolishes E3 ubiquitin-protein ligase activity." evidence="31">
    <original>H</original>
    <variation>A</variation>
    <location>
        <position position="741"/>
    </location>
</feature>
<feature type="sequence conflict" description="In Ref. 5; BAF82078." evidence="37" ref="5">
    <original>K</original>
    <variation>E</variation>
    <location>
        <position position="383"/>
    </location>
</feature>
<feature type="sequence conflict" description="In Ref. 1; AAF28469." evidence="37" ref="1">
    <original>K</original>
    <variation>N</variation>
    <location>
        <position position="383"/>
    </location>
</feature>
<feature type="sequence conflict" description="In Ref. 1; AAF28469." evidence="37" ref="1">
    <original>A</original>
    <variation>S</variation>
    <location>
        <position position="457"/>
    </location>
</feature>
<feature type="sequence conflict" description="In Ref. 5; BAF82078." evidence="37" ref="5">
    <original>S</original>
    <variation>N</variation>
    <location>
        <position position="675"/>
    </location>
</feature>
<feature type="strand" evidence="49">
    <location>
        <begin position="1"/>
        <end position="7"/>
    </location>
</feature>
<feature type="strand" evidence="49">
    <location>
        <begin position="13"/>
        <end position="19"/>
    </location>
</feature>
<feature type="helix" evidence="49">
    <location>
        <begin position="25"/>
        <end position="36"/>
    </location>
</feature>
<feature type="helix" evidence="49">
    <location>
        <begin position="40"/>
        <end position="42"/>
    </location>
</feature>
<feature type="strand" evidence="49">
    <location>
        <begin position="43"/>
        <end position="47"/>
    </location>
</feature>
<feature type="turn" evidence="49">
    <location>
        <begin position="58"/>
        <end position="62"/>
    </location>
</feature>
<feature type="strand" evidence="49">
    <location>
        <begin position="68"/>
        <end position="73"/>
    </location>
</feature>
<feature type="strand" evidence="59">
    <location>
        <begin position="126"/>
        <end position="128"/>
    </location>
</feature>
<feature type="strand" evidence="59">
    <location>
        <begin position="130"/>
        <end position="132"/>
    </location>
</feature>
<feature type="strand" evidence="60">
    <location>
        <begin position="133"/>
        <end position="135"/>
    </location>
</feature>
<feature type="strand" evidence="59">
    <location>
        <begin position="140"/>
        <end position="144"/>
    </location>
</feature>
<feature type="turn" evidence="59">
    <location>
        <begin position="146"/>
        <end position="148"/>
    </location>
</feature>
<feature type="strand" evidence="59">
    <location>
        <begin position="151"/>
        <end position="162"/>
    </location>
</feature>
<feature type="strand" evidence="50">
    <location>
        <begin position="164"/>
        <end position="167"/>
    </location>
</feature>
<feature type="strand" evidence="59">
    <location>
        <begin position="173"/>
        <end position="175"/>
    </location>
</feature>
<feature type="helix" evidence="59">
    <location>
        <begin position="179"/>
        <end position="181"/>
    </location>
</feature>
<feature type="strand" evidence="59">
    <location>
        <begin position="183"/>
        <end position="190"/>
    </location>
</feature>
<feature type="helix" evidence="59">
    <location>
        <begin position="192"/>
        <end position="194"/>
    </location>
</feature>
<feature type="strand" evidence="59">
    <location>
        <begin position="196"/>
        <end position="200"/>
    </location>
</feature>
<feature type="helix" evidence="59">
    <location>
        <begin position="201"/>
        <end position="203"/>
    </location>
</feature>
<feature type="strand" evidence="60">
    <location>
        <begin position="204"/>
        <end position="206"/>
    </location>
</feature>
<feature type="strand" evidence="50">
    <location>
        <begin position="210"/>
        <end position="212"/>
    </location>
</feature>
<feature type="helix" evidence="59">
    <location>
        <begin position="214"/>
        <end position="216"/>
    </location>
</feature>
<feature type="strand" evidence="59">
    <location>
        <begin position="222"/>
        <end position="227"/>
    </location>
</feature>
<feature type="strand" evidence="59">
    <location>
        <begin position="229"/>
        <end position="231"/>
    </location>
</feature>
<feature type="strand" evidence="59">
    <location>
        <begin position="237"/>
        <end position="248"/>
    </location>
</feature>
<feature type="strand" evidence="59">
    <location>
        <begin position="253"/>
        <end position="260"/>
    </location>
</feature>
<feature type="strand" evidence="61">
    <location>
        <begin position="262"/>
        <end position="264"/>
    </location>
</feature>
<feature type="strand" evidence="59">
    <location>
        <begin position="266"/>
        <end position="270"/>
    </location>
</feature>
<feature type="helix" evidence="50">
    <location>
        <begin position="274"/>
        <end position="276"/>
    </location>
</feature>
<feature type="strand" evidence="50">
    <location>
        <begin position="277"/>
        <end position="279"/>
    </location>
</feature>
<feature type="strand" evidence="53">
    <location>
        <begin position="283"/>
        <end position="286"/>
    </location>
</feature>
<feature type="turn" evidence="54">
    <location>
        <begin position="303"/>
        <end position="307"/>
    </location>
</feature>
<feature type="strand" evidence="51">
    <location>
        <begin position="309"/>
        <end position="311"/>
    </location>
</feature>
<feature type="turn" evidence="54">
    <location>
        <begin position="314"/>
        <end position="316"/>
    </location>
</feature>
<feature type="turn" evidence="54">
    <location>
        <begin position="319"/>
        <end position="321"/>
    </location>
</feature>
<feature type="strand" evidence="52">
    <location>
        <begin position="323"/>
        <end position="325"/>
    </location>
</feature>
<feature type="helix" evidence="54">
    <location>
        <begin position="327"/>
        <end position="329"/>
    </location>
</feature>
<feature type="strand" evidence="54">
    <location>
        <begin position="330"/>
        <end position="332"/>
    </location>
</feature>
<feature type="turn" evidence="54">
    <location>
        <begin position="334"/>
        <end position="336"/>
    </location>
</feature>
<feature type="strand" evidence="54">
    <location>
        <begin position="339"/>
        <end position="341"/>
    </location>
</feature>
<feature type="helix" evidence="54">
    <location>
        <begin position="342"/>
        <end position="344"/>
    </location>
</feature>
<feature type="strand" evidence="54">
    <location>
        <begin position="345"/>
        <end position="347"/>
    </location>
</feature>
<feature type="strand" evidence="54">
    <location>
        <begin position="354"/>
        <end position="356"/>
    </location>
</feature>
<feature type="turn" evidence="54">
    <location>
        <begin position="361"/>
        <end position="363"/>
    </location>
</feature>
<feature type="strand" evidence="57">
    <location>
        <begin position="417"/>
        <end position="419"/>
    </location>
</feature>
<feature type="strand" evidence="55">
    <location>
        <begin position="429"/>
        <end position="432"/>
    </location>
</feature>
<feature type="helix" evidence="55">
    <location>
        <begin position="433"/>
        <end position="438"/>
    </location>
</feature>
<feature type="turn" evidence="57">
    <location>
        <begin position="439"/>
        <end position="442"/>
    </location>
</feature>
<feature type="strand" evidence="55">
    <location>
        <begin position="448"/>
        <end position="452"/>
    </location>
</feature>
<feature type="turn" evidence="55">
    <location>
        <begin position="453"/>
        <end position="455"/>
    </location>
</feature>
<feature type="strand" evidence="55">
    <location>
        <begin position="456"/>
        <end position="462"/>
    </location>
</feature>
<feature type="strand" evidence="55">
    <location>
        <begin position="473"/>
        <end position="479"/>
    </location>
</feature>
<feature type="turn" evidence="56">
    <location>
        <begin position="487"/>
        <end position="489"/>
    </location>
</feature>
<feature type="helix" evidence="55">
    <location>
        <begin position="503"/>
        <end position="511"/>
    </location>
</feature>
<feature type="strand" evidence="55">
    <location>
        <begin position="512"/>
        <end position="514"/>
    </location>
</feature>
<feature type="turn" evidence="55">
    <location>
        <begin position="518"/>
        <end position="520"/>
    </location>
</feature>
<feature type="helix" evidence="55">
    <location>
        <begin position="527"/>
        <end position="529"/>
    </location>
</feature>
<feature type="strand" evidence="55">
    <location>
        <begin position="533"/>
        <end position="538"/>
    </location>
</feature>
<feature type="helix" evidence="55">
    <location>
        <begin position="539"/>
        <end position="544"/>
    </location>
</feature>
<feature type="strand" evidence="56">
    <location>
        <begin position="546"/>
        <end position="548"/>
    </location>
</feature>
<feature type="strand" evidence="55">
    <location>
        <begin position="550"/>
        <end position="568"/>
    </location>
</feature>
<feature type="strand" evidence="55">
    <location>
        <begin position="572"/>
        <end position="582"/>
    </location>
</feature>
<feature type="helix" evidence="55">
    <location>
        <begin position="592"/>
        <end position="601"/>
    </location>
</feature>
<feature type="helix" evidence="55">
    <location>
        <begin position="611"/>
        <end position="617"/>
    </location>
</feature>
<feature type="helix" evidence="58">
    <location>
        <begin position="678"/>
        <end position="686"/>
    </location>
</feature>
<feature type="helix" evidence="58">
    <location>
        <begin position="688"/>
        <end position="690"/>
    </location>
</feature>
<feature type="helix" evidence="58">
    <location>
        <begin position="691"/>
        <end position="699"/>
    </location>
</feature>
<feature type="strand" evidence="58">
    <location>
        <begin position="706"/>
        <end position="708"/>
    </location>
</feature>
<feature type="helix" evidence="58">
    <location>
        <begin position="710"/>
        <end position="721"/>
    </location>
</feature>
<feature type="turn" evidence="58">
    <location>
        <begin position="725"/>
        <end position="727"/>
    </location>
</feature>
<feature type="strand" evidence="58">
    <location>
        <begin position="728"/>
        <end position="730"/>
    </location>
</feature>
<feature type="strand" evidence="58">
    <location>
        <begin position="732"/>
        <end position="736"/>
    </location>
</feature>
<feature type="strand" evidence="58">
    <location>
        <begin position="742"/>
        <end position="744"/>
    </location>
</feature>
<feature type="helix" evidence="58">
    <location>
        <begin position="745"/>
        <end position="753"/>
    </location>
</feature>
<feature type="turn" evidence="58">
    <location>
        <begin position="760"/>
        <end position="762"/>
    </location>
</feature>
<feature type="helix" evidence="58">
    <location>
        <begin position="776"/>
        <end position="785"/>
    </location>
</feature>
<feature type="turn" evidence="58">
    <location>
        <begin position="787"/>
        <end position="792"/>
    </location>
</feature>
<dbReference type="EC" id="2.3.2.27" evidence="34"/>
<dbReference type="EMBL" id="AF129507">
    <property type="protein sequence ID" value="AAF28469.1"/>
    <property type="molecule type" value="mRNA"/>
</dbReference>
<dbReference type="EMBL" id="AB177623">
    <property type="protein sequence ID" value="BAF36719.1"/>
    <property type="molecule type" value="mRNA"/>
</dbReference>
<dbReference type="EMBL" id="AB177624">
    <property type="protein sequence ID" value="BAF36720.1"/>
    <property type="molecule type" value="mRNA"/>
</dbReference>
<dbReference type="EMBL" id="AB075601">
    <property type="protein sequence ID" value="BAC20576.1"/>
    <property type="molecule type" value="mRNA"/>
</dbReference>
<dbReference type="EMBL" id="AF274048">
    <property type="protein sequence ID" value="AAK55744.1"/>
    <property type="molecule type" value="mRNA"/>
</dbReference>
<dbReference type="EMBL" id="EF560733">
    <property type="protein sequence ID" value="ABQ59043.1"/>
    <property type="molecule type" value="mRNA"/>
</dbReference>
<dbReference type="EMBL" id="AK025578">
    <property type="protein sequence ID" value="BAB15177.1"/>
    <property type="status" value="ALT_INIT"/>
    <property type="molecule type" value="mRNA"/>
</dbReference>
<dbReference type="EMBL" id="AK289389">
    <property type="protein sequence ID" value="BAF82078.1"/>
    <property type="molecule type" value="mRNA"/>
</dbReference>
<dbReference type="EMBL" id="AK314579">
    <property type="protein sequence ID" value="BAG37156.1"/>
    <property type="molecule type" value="mRNA"/>
</dbReference>
<dbReference type="EMBL" id="AY787925">
    <property type="protein sequence ID" value="AAV40831.1"/>
    <property type="molecule type" value="Genomic_DNA"/>
</dbReference>
<dbReference type="EMBL" id="AC027319">
    <property type="status" value="NOT_ANNOTATED_CDS"/>
    <property type="molecule type" value="Genomic_DNA"/>
</dbReference>
<dbReference type="EMBL" id="AC053467">
    <property type="protein sequence ID" value="AAF64067.1"/>
    <property type="molecule type" value="Genomic_DNA"/>
</dbReference>
<dbReference type="EMBL" id="CH471139">
    <property type="protein sequence ID" value="EAW69187.1"/>
    <property type="molecule type" value="Genomic_DNA"/>
</dbReference>
<dbReference type="EMBL" id="BC113875">
    <property type="protein sequence ID" value="AAI13876.2"/>
    <property type="molecule type" value="mRNA"/>
</dbReference>
<dbReference type="CCDS" id="CCDS74262.1">
    <molecule id="Q96T88-2"/>
</dbReference>
<dbReference type="CCDS" id="CCDS74263.1">
    <molecule id="Q96T88-1"/>
</dbReference>
<dbReference type="RefSeq" id="NP_001041666.1">
    <molecule id="Q96T88-1"/>
    <property type="nucleotide sequence ID" value="NM_001048201.3"/>
</dbReference>
<dbReference type="RefSeq" id="NP_001276979.1">
    <molecule id="Q96T88-1"/>
    <property type="nucleotide sequence ID" value="NM_001290050.2"/>
</dbReference>
<dbReference type="RefSeq" id="NP_001276980.1">
    <molecule id="Q96T88-1"/>
    <property type="nucleotide sequence ID" value="NM_001290051.2"/>
</dbReference>
<dbReference type="RefSeq" id="NP_001276981.1">
    <molecule id="Q96T88-1"/>
    <property type="nucleotide sequence ID" value="NM_001290052.2"/>
</dbReference>
<dbReference type="RefSeq" id="NP_037414.3">
    <property type="nucleotide sequence ID" value="NM_013282.4"/>
</dbReference>
<dbReference type="PDB" id="2FAZ">
    <property type="method" value="X-ray"/>
    <property type="resolution" value="2.00 A"/>
    <property type="chains" value="A/B=1-76"/>
</dbReference>
<dbReference type="PDB" id="2L3R">
    <property type="method" value="NMR"/>
    <property type="chains" value="A=126-285"/>
</dbReference>
<dbReference type="PDB" id="2LGG">
    <property type="method" value="NMR"/>
    <property type="chains" value="A=298-366"/>
</dbReference>
<dbReference type="PDB" id="2LGK">
    <property type="method" value="NMR"/>
    <property type="chains" value="A=298-366"/>
</dbReference>
<dbReference type="PDB" id="2LGL">
    <property type="method" value="NMR"/>
    <property type="chains" value="A=298-366"/>
</dbReference>
<dbReference type="PDB" id="2PB7">
    <property type="method" value="X-ray"/>
    <property type="resolution" value="1.90 A"/>
    <property type="chains" value="A=408-643"/>
</dbReference>
<dbReference type="PDB" id="3ASK">
    <property type="method" value="X-ray"/>
    <property type="resolution" value="2.90 A"/>
    <property type="chains" value="A/B/C/D=134-367"/>
</dbReference>
<dbReference type="PDB" id="3ASL">
    <property type="method" value="X-ray"/>
    <property type="resolution" value="1.41 A"/>
    <property type="chains" value="A=298-367"/>
</dbReference>
<dbReference type="PDB" id="3BI7">
    <property type="method" value="X-ray"/>
    <property type="resolution" value="1.70 A"/>
    <property type="chains" value="A=414-617"/>
</dbReference>
<dbReference type="PDB" id="3CLZ">
    <property type="method" value="X-ray"/>
    <property type="resolution" value="2.20 A"/>
    <property type="chains" value="A/B/C/D=414-617"/>
</dbReference>
<dbReference type="PDB" id="3DB3">
    <property type="method" value="X-ray"/>
    <property type="resolution" value="2.40 A"/>
    <property type="chains" value="A=126-285"/>
</dbReference>
<dbReference type="PDB" id="3DB4">
    <property type="method" value="X-ray"/>
    <property type="resolution" value="2.40 A"/>
    <property type="chains" value="A=126-285"/>
</dbReference>
<dbReference type="PDB" id="3DWH">
    <property type="method" value="X-ray"/>
    <property type="resolution" value="1.95 A"/>
    <property type="chains" value="A=414-617"/>
</dbReference>
<dbReference type="PDB" id="3FL2">
    <property type="method" value="X-ray"/>
    <property type="resolution" value="1.75 A"/>
    <property type="chains" value="A=672-793"/>
</dbReference>
<dbReference type="PDB" id="3SHB">
    <property type="method" value="X-ray"/>
    <property type="resolution" value="1.80 A"/>
    <property type="chains" value="A=298-366"/>
</dbReference>
<dbReference type="PDB" id="3SOU">
    <property type="method" value="X-ray"/>
    <property type="resolution" value="1.80 A"/>
    <property type="chains" value="A/B=298-367"/>
</dbReference>
<dbReference type="PDB" id="3SOW">
    <property type="method" value="X-ray"/>
    <property type="resolution" value="1.95 A"/>
    <property type="chains" value="A/B=298-367"/>
</dbReference>
<dbReference type="PDB" id="3SOX">
    <property type="method" value="X-ray"/>
    <property type="resolution" value="2.65 A"/>
    <property type="chains" value="A/B=298-367"/>
</dbReference>
<dbReference type="PDB" id="3T6R">
    <property type="method" value="X-ray"/>
    <property type="resolution" value="1.95 A"/>
    <property type="chains" value="A/B=299-364"/>
</dbReference>
<dbReference type="PDB" id="3ZVY">
    <property type="method" value="X-ray"/>
    <property type="resolution" value="1.95 A"/>
    <property type="chains" value="A/B=296-367"/>
</dbReference>
<dbReference type="PDB" id="3ZVZ">
    <property type="method" value="X-ray"/>
    <property type="resolution" value="1.45 A"/>
    <property type="chains" value="B=314-367"/>
</dbReference>
<dbReference type="PDB" id="4GY5">
    <property type="method" value="X-ray"/>
    <property type="resolution" value="2.96 A"/>
    <property type="chains" value="A/B/C/D=134-366"/>
</dbReference>
<dbReference type="PDB" id="4QQD">
    <property type="method" value="X-ray"/>
    <property type="resolution" value="2.28 A"/>
    <property type="chains" value="A/B=126-285"/>
</dbReference>
<dbReference type="PDB" id="5C6D">
    <property type="method" value="X-ray"/>
    <property type="resolution" value="2.29 A"/>
    <property type="chains" value="C/D=634-665"/>
</dbReference>
<dbReference type="PDB" id="5IAY">
    <property type="method" value="NMR"/>
    <property type="chains" value="A=134-285, B=642-657"/>
</dbReference>
<dbReference type="PDB" id="5XPI">
    <property type="method" value="X-ray"/>
    <property type="resolution" value="2.20 A"/>
    <property type="chains" value="A=127-283"/>
</dbReference>
<dbReference type="PDB" id="5YY9">
    <property type="method" value="X-ray"/>
    <property type="resolution" value="2.65 A"/>
    <property type="chains" value="A/B=123-285"/>
</dbReference>
<dbReference type="PDB" id="5YYA">
    <property type="method" value="X-ray"/>
    <property type="resolution" value="1.70 A"/>
    <property type="chains" value="A=123-285"/>
</dbReference>
<dbReference type="PDB" id="6B9M">
    <property type="method" value="X-ray"/>
    <property type="resolution" value="1.68 A"/>
    <property type="chains" value="D=638-678"/>
</dbReference>
<dbReference type="PDB" id="6IIW">
    <property type="method" value="X-ray"/>
    <property type="resolution" value="1.70 A"/>
    <property type="chains" value="A=299-366"/>
</dbReference>
<dbReference type="PDB" id="6VCS">
    <property type="method" value="X-ray"/>
    <property type="resolution" value="1.70 A"/>
    <property type="chains" value="A/B/E=414-617"/>
</dbReference>
<dbReference type="PDB" id="6VED">
    <property type="method" value="NMR"/>
    <property type="chains" value="A=133-300"/>
</dbReference>
<dbReference type="PDB" id="6VYJ">
    <property type="method" value="X-ray"/>
    <property type="resolution" value="1.39 A"/>
    <property type="chains" value="A=122-283"/>
</dbReference>
<dbReference type="PDB" id="6W92">
    <property type="method" value="X-ray"/>
    <property type="resolution" value="1.30 A"/>
    <property type="chains" value="A=122-283"/>
</dbReference>
<dbReference type="PDB" id="7FB7">
    <property type="method" value="X-ray"/>
    <property type="resolution" value="1.45 A"/>
    <property type="chains" value="A/B=123-285"/>
</dbReference>
<dbReference type="PDB" id="8JIG">
    <property type="method" value="X-ray"/>
    <property type="resolution" value="2.40 A"/>
    <property type="chains" value="A/B=413-617"/>
</dbReference>
<dbReference type="PDB" id="8WMS">
    <property type="method" value="X-ray"/>
    <property type="resolution" value="2.40 A"/>
    <property type="chains" value="A=299-366"/>
</dbReference>
<dbReference type="PDB" id="8XV4">
    <property type="method" value="X-ray"/>
    <property type="resolution" value="3.20 A"/>
    <property type="chains" value="A/B=134-366"/>
</dbReference>
<dbReference type="PDB" id="8XV6">
    <property type="method" value="X-ray"/>
    <property type="resolution" value="1.60 A"/>
    <property type="chains" value="A/C=298-367"/>
</dbReference>
<dbReference type="PDB" id="8XV7">
    <property type="method" value="X-ray"/>
    <property type="resolution" value="2.25 A"/>
    <property type="chains" value="A/C/E/G=134-366"/>
</dbReference>
<dbReference type="PDB" id="8XV8">
    <property type="method" value="X-ray"/>
    <property type="resolution" value="2.05 A"/>
    <property type="chains" value="A/C/E/G=298-367"/>
</dbReference>
<dbReference type="PDBsum" id="2FAZ"/>
<dbReference type="PDBsum" id="2L3R"/>
<dbReference type="PDBsum" id="2LGG"/>
<dbReference type="PDBsum" id="2LGK"/>
<dbReference type="PDBsum" id="2LGL"/>
<dbReference type="PDBsum" id="2PB7"/>
<dbReference type="PDBsum" id="3ASK"/>
<dbReference type="PDBsum" id="3ASL"/>
<dbReference type="PDBsum" id="3BI7"/>
<dbReference type="PDBsum" id="3CLZ"/>
<dbReference type="PDBsum" id="3DB3"/>
<dbReference type="PDBsum" id="3DB4"/>
<dbReference type="PDBsum" id="3DWH"/>
<dbReference type="PDBsum" id="3FL2"/>
<dbReference type="PDBsum" id="3SHB"/>
<dbReference type="PDBsum" id="3SOU"/>
<dbReference type="PDBsum" id="3SOW"/>
<dbReference type="PDBsum" id="3SOX"/>
<dbReference type="PDBsum" id="3T6R"/>
<dbReference type="PDBsum" id="3ZVY"/>
<dbReference type="PDBsum" id="3ZVZ"/>
<dbReference type="PDBsum" id="4GY5"/>
<dbReference type="PDBsum" id="4QQD"/>
<dbReference type="PDBsum" id="5C6D"/>
<dbReference type="PDBsum" id="5IAY"/>
<dbReference type="PDBsum" id="5XPI"/>
<dbReference type="PDBsum" id="5YY9"/>
<dbReference type="PDBsum" id="5YYA"/>
<dbReference type="PDBsum" id="6B9M"/>
<dbReference type="PDBsum" id="6IIW"/>
<dbReference type="PDBsum" id="6VCS"/>
<dbReference type="PDBsum" id="6VED"/>
<dbReference type="PDBsum" id="6VYJ"/>
<dbReference type="PDBsum" id="6W92"/>
<dbReference type="PDBsum" id="7FB7"/>
<dbReference type="PDBsum" id="8JIG"/>
<dbReference type="PDBsum" id="8WMS"/>
<dbReference type="PDBsum" id="8XV4"/>
<dbReference type="PDBsum" id="8XV6"/>
<dbReference type="PDBsum" id="8XV7"/>
<dbReference type="PDBsum" id="8XV8"/>
<dbReference type="BMRB" id="Q96T88"/>
<dbReference type="SASBDB" id="Q96T88"/>
<dbReference type="SMR" id="Q96T88"/>
<dbReference type="BioGRID" id="118893">
    <property type="interactions" value="226"/>
</dbReference>
<dbReference type="CORUM" id="Q96T88"/>
<dbReference type="FunCoup" id="Q96T88">
    <property type="interactions" value="1543"/>
</dbReference>
<dbReference type="IntAct" id="Q96T88">
    <property type="interactions" value="67"/>
</dbReference>
<dbReference type="MINT" id="Q96T88"/>
<dbReference type="STRING" id="9606.ENSP00000479617"/>
<dbReference type="BindingDB" id="Q96T88"/>
<dbReference type="ChEMBL" id="CHEMBL2424510"/>
<dbReference type="GlyGen" id="Q96T88">
    <property type="glycosylation" value="1 site, 1 O-linked glycan (1 site)"/>
</dbReference>
<dbReference type="iPTMnet" id="Q96T88"/>
<dbReference type="PhosphoSitePlus" id="Q96T88"/>
<dbReference type="SwissPalm" id="Q96T88"/>
<dbReference type="BioMuta" id="UHRF1"/>
<dbReference type="DMDM" id="67462077"/>
<dbReference type="jPOST" id="Q96T88"/>
<dbReference type="MassIVE" id="Q96T88"/>
<dbReference type="PaxDb" id="9606-ENSP00000479617"/>
<dbReference type="PeptideAtlas" id="Q96T88"/>
<dbReference type="ProteomicsDB" id="78215">
    <molecule id="Q96T88-1"/>
</dbReference>
<dbReference type="Pumba" id="Q96T88"/>
<dbReference type="Antibodypedia" id="72541">
    <property type="antibodies" value="410 antibodies from 34 providers"/>
</dbReference>
<dbReference type="DNASU" id="29128"/>
<dbReference type="Ensembl" id="ENST00000612630.4">
    <molecule id="Q96T88-1"/>
    <property type="protein sequence ID" value="ENSP00000484739.1"/>
    <property type="gene ID" value="ENSG00000276043.5"/>
</dbReference>
<dbReference type="Ensembl" id="ENST00000615884.4">
    <molecule id="Q96T88-1"/>
    <property type="protein sequence ID" value="ENSP00000478601.1"/>
    <property type="gene ID" value="ENSG00000276043.5"/>
</dbReference>
<dbReference type="Ensembl" id="ENST00000616255.1">
    <molecule id="Q96T88-1"/>
    <property type="protein sequence ID" value="ENSP00000478348.1"/>
    <property type="gene ID" value="ENSG00000276043.5"/>
</dbReference>
<dbReference type="Ensembl" id="ENST00000624301.3">
    <molecule id="Q96T88-1"/>
    <property type="protein sequence ID" value="ENSP00000485604.1"/>
    <property type="gene ID" value="ENSG00000276043.5"/>
</dbReference>
<dbReference type="Ensembl" id="ENST00000650932.1">
    <molecule id="Q96T88-1"/>
    <property type="protein sequence ID" value="ENSP00000498698.1"/>
    <property type="gene ID" value="ENSG00000276043.5"/>
</dbReference>
<dbReference type="GeneID" id="29128"/>
<dbReference type="KEGG" id="hsa:29128"/>
<dbReference type="MANE-Select" id="ENST00000650932.1">
    <property type="protein sequence ID" value="ENSP00000498698.1"/>
    <property type="RefSeq nucleotide sequence ID" value="NM_001048201.3"/>
    <property type="RefSeq protein sequence ID" value="NP_001041666.1"/>
</dbReference>
<dbReference type="UCSC" id="uc032hkj.2">
    <molecule id="Q96T88-1"/>
    <property type="organism name" value="human"/>
</dbReference>
<dbReference type="AGR" id="HGNC:12556"/>
<dbReference type="CTD" id="29128"/>
<dbReference type="DisGeNET" id="29128"/>
<dbReference type="GeneCards" id="UHRF1"/>
<dbReference type="HGNC" id="HGNC:12556">
    <property type="gene designation" value="UHRF1"/>
</dbReference>
<dbReference type="HPA" id="ENSG00000276043">
    <property type="expression patterns" value="Group enriched (bone marrow, lymphoid tissue)"/>
</dbReference>
<dbReference type="MalaCards" id="UHRF1"/>
<dbReference type="MIM" id="607990">
    <property type="type" value="gene"/>
</dbReference>
<dbReference type="neXtProt" id="NX_Q96T88"/>
<dbReference type="OpenTargets" id="ENSG00000276043"/>
<dbReference type="Orphanet" id="2268">
    <property type="disease" value="ICF syndrome"/>
</dbReference>
<dbReference type="PharmGKB" id="PA37196"/>
<dbReference type="VEuPathDB" id="HostDB:ENSG00000276043"/>
<dbReference type="eggNOG" id="ENOG502QRDQ">
    <property type="taxonomic scope" value="Eukaryota"/>
</dbReference>
<dbReference type="GeneTree" id="ENSGT00390000008296"/>
<dbReference type="HOGENOM" id="CLU_022357_0_0_1"/>
<dbReference type="InParanoid" id="Q96T88"/>
<dbReference type="OrthoDB" id="2270193at2759"/>
<dbReference type="PAN-GO" id="Q96T88">
    <property type="GO annotations" value="3 GO annotations based on evolutionary models"/>
</dbReference>
<dbReference type="PhylomeDB" id="Q96T88"/>
<dbReference type="PathwayCommons" id="Q96T88"/>
<dbReference type="Reactome" id="R-HSA-5334118">
    <property type="pathway name" value="DNA methylation"/>
</dbReference>
<dbReference type="Reactome" id="R-HSA-9821002">
    <property type="pathway name" value="Chromatin modifications during the maternal to zygotic transition (MZT)"/>
</dbReference>
<dbReference type="SignaLink" id="Q96T88"/>
<dbReference type="SIGNOR" id="Q96T88"/>
<dbReference type="UniPathway" id="UPA00143"/>
<dbReference type="BioGRID-ORCS" id="29128">
    <property type="hits" value="65 hits in 331 CRISPR screens"/>
</dbReference>
<dbReference type="CD-CODE" id="91857CE7">
    <property type="entry name" value="Nucleolus"/>
</dbReference>
<dbReference type="ChiTaRS" id="UHRF1">
    <property type="organism name" value="human"/>
</dbReference>
<dbReference type="EvolutionaryTrace" id="Q96T88"/>
<dbReference type="GeneWiki" id="UHRF1"/>
<dbReference type="GenomeRNAi" id="29128"/>
<dbReference type="Pharos" id="Q96T88">
    <property type="development level" value="Tbio"/>
</dbReference>
<dbReference type="PRO" id="PR:Q96T88"/>
<dbReference type="Proteomes" id="UP000005640">
    <property type="component" value="Chromosome 19"/>
</dbReference>
<dbReference type="RNAct" id="Q96T88">
    <property type="molecule type" value="protein"/>
</dbReference>
<dbReference type="Bgee" id="ENSG00000276043">
    <property type="expression patterns" value="Expressed in oocyte and 139 other cell types or tissues"/>
</dbReference>
<dbReference type="ExpressionAtlas" id="Q96T88">
    <property type="expression patterns" value="baseline and differential"/>
</dbReference>
<dbReference type="GO" id="GO:0000785">
    <property type="term" value="C:chromatin"/>
    <property type="evidence" value="ECO:0000314"/>
    <property type="project" value="UniProtKB"/>
</dbReference>
<dbReference type="GO" id="GO:0000791">
    <property type="term" value="C:euchromatin"/>
    <property type="evidence" value="ECO:0000314"/>
    <property type="project" value="UniProtKB"/>
</dbReference>
<dbReference type="GO" id="GO:0000792">
    <property type="term" value="C:heterochromatin"/>
    <property type="evidence" value="ECO:0000314"/>
    <property type="project" value="UniProtKB"/>
</dbReference>
<dbReference type="GO" id="GO:0016363">
    <property type="term" value="C:nuclear matrix"/>
    <property type="evidence" value="ECO:0000250"/>
    <property type="project" value="BHF-UCL"/>
</dbReference>
<dbReference type="GO" id="GO:0005654">
    <property type="term" value="C:nucleoplasm"/>
    <property type="evidence" value="ECO:0000314"/>
    <property type="project" value="HPA"/>
</dbReference>
<dbReference type="GO" id="GO:0005634">
    <property type="term" value="C:nucleus"/>
    <property type="evidence" value="ECO:0000314"/>
    <property type="project" value="BHF-UCL"/>
</dbReference>
<dbReference type="GO" id="GO:0005657">
    <property type="term" value="C:replication fork"/>
    <property type="evidence" value="ECO:0000314"/>
    <property type="project" value="UniProtKB"/>
</dbReference>
<dbReference type="GO" id="GO:0005819">
    <property type="term" value="C:spindle"/>
    <property type="evidence" value="ECO:0000305"/>
    <property type="project" value="UniProt"/>
</dbReference>
<dbReference type="GO" id="GO:0000987">
    <property type="term" value="F:cis-regulatory region sequence-specific DNA binding"/>
    <property type="evidence" value="ECO:0000314"/>
    <property type="project" value="BHF-UCL"/>
</dbReference>
<dbReference type="GO" id="GO:0140612">
    <property type="term" value="F:DNA damage sensor activity"/>
    <property type="evidence" value="ECO:0000304"/>
    <property type="project" value="BHF-UCL"/>
</dbReference>
<dbReference type="GO" id="GO:0044729">
    <property type="term" value="F:hemi-methylated DNA-binding"/>
    <property type="evidence" value="ECO:0000314"/>
    <property type="project" value="UniProtKB"/>
</dbReference>
<dbReference type="GO" id="GO:0042393">
    <property type="term" value="F:histone binding"/>
    <property type="evidence" value="ECO:0000314"/>
    <property type="project" value="UniProtKB"/>
</dbReference>
<dbReference type="GO" id="GO:0141055">
    <property type="term" value="F:histone H3 ubiquitin ligase activity"/>
    <property type="evidence" value="ECO:0000250"/>
    <property type="project" value="BHF-UCL"/>
</dbReference>
<dbReference type="GO" id="GO:0062072">
    <property type="term" value="F:histone H3K9me2/3 reader activity"/>
    <property type="evidence" value="ECO:0000314"/>
    <property type="project" value="UniProtKB"/>
</dbReference>
<dbReference type="GO" id="GO:0042802">
    <property type="term" value="F:identical protein binding"/>
    <property type="evidence" value="ECO:0000250"/>
    <property type="project" value="BHF-UCL"/>
</dbReference>
<dbReference type="GO" id="GO:0008327">
    <property type="term" value="F:methyl-CpG binding"/>
    <property type="evidence" value="ECO:0000314"/>
    <property type="project" value="UniProtKB"/>
</dbReference>
<dbReference type="GO" id="GO:0035064">
    <property type="term" value="F:methylated histone binding"/>
    <property type="evidence" value="ECO:0000314"/>
    <property type="project" value="UniProtKB"/>
</dbReference>
<dbReference type="GO" id="GO:0003676">
    <property type="term" value="F:nucleic acid binding"/>
    <property type="evidence" value="ECO:0000269"/>
    <property type="project" value="DisProt"/>
</dbReference>
<dbReference type="GO" id="GO:0061630">
    <property type="term" value="F:ubiquitin protein ligase activity"/>
    <property type="evidence" value="ECO:0000314"/>
    <property type="project" value="UniProt"/>
</dbReference>
<dbReference type="GO" id="GO:0004842">
    <property type="term" value="F:ubiquitin-protein transferase activity"/>
    <property type="evidence" value="ECO:0000314"/>
    <property type="project" value="UniProtKB"/>
</dbReference>
<dbReference type="GO" id="GO:0008270">
    <property type="term" value="F:zinc ion binding"/>
    <property type="evidence" value="ECO:0000314"/>
    <property type="project" value="UniProtKB"/>
</dbReference>
<dbReference type="GO" id="GO:0006974">
    <property type="term" value="P:DNA damage response"/>
    <property type="evidence" value="ECO:0000304"/>
    <property type="project" value="BHF-UCL"/>
</dbReference>
<dbReference type="GO" id="GO:0000724">
    <property type="term" value="P:double-strand break repair via homologous recombination"/>
    <property type="evidence" value="ECO:0000304"/>
    <property type="project" value="BHF-UCL"/>
</dbReference>
<dbReference type="GO" id="GO:0040029">
    <property type="term" value="P:epigenetic regulation of gene expression"/>
    <property type="evidence" value="ECO:0000304"/>
    <property type="project" value="BHF-UCL"/>
</dbReference>
<dbReference type="GO" id="GO:0031507">
    <property type="term" value="P:heterochromatin formation"/>
    <property type="evidence" value="ECO:0000314"/>
    <property type="project" value="UniProtKB"/>
</dbReference>
<dbReference type="GO" id="GO:0035825">
    <property type="term" value="P:homologous recombination"/>
    <property type="evidence" value="ECO:0000304"/>
    <property type="project" value="BHF-UCL"/>
</dbReference>
<dbReference type="GO" id="GO:0090307">
    <property type="term" value="P:mitotic spindle assembly"/>
    <property type="evidence" value="ECO:0000314"/>
    <property type="project" value="UniProt"/>
</dbReference>
<dbReference type="GO" id="GO:0044027">
    <property type="term" value="P:negative regulation of gene expression via chromosomal CpG island methylation"/>
    <property type="evidence" value="ECO:0000315"/>
    <property type="project" value="UniProtKB"/>
</dbReference>
<dbReference type="GO" id="GO:0000122">
    <property type="term" value="P:negative regulation of transcription by RNA polymerase II"/>
    <property type="evidence" value="ECO:0000314"/>
    <property type="project" value="UniProtKB"/>
</dbReference>
<dbReference type="GO" id="GO:0051247">
    <property type="term" value="P:positive regulation of protein metabolic process"/>
    <property type="evidence" value="ECO:0000314"/>
    <property type="project" value="BHF-UCL"/>
</dbReference>
<dbReference type="GO" id="GO:0045944">
    <property type="term" value="P:positive regulation of transcription by RNA polymerase II"/>
    <property type="evidence" value="ECO:0000314"/>
    <property type="project" value="BHF-UCL"/>
</dbReference>
<dbReference type="GO" id="GO:0051865">
    <property type="term" value="P:protein autoubiquitination"/>
    <property type="evidence" value="ECO:0000314"/>
    <property type="project" value="UniProtKB"/>
</dbReference>
<dbReference type="GO" id="GO:0016567">
    <property type="term" value="P:protein ubiquitination"/>
    <property type="evidence" value="ECO:0000318"/>
    <property type="project" value="GO_Central"/>
</dbReference>
<dbReference type="GO" id="GO:0050678">
    <property type="term" value="P:regulation of epithelial cell proliferation"/>
    <property type="evidence" value="ECO:0000315"/>
    <property type="project" value="BHF-UCL"/>
</dbReference>
<dbReference type="GO" id="GO:0006511">
    <property type="term" value="P:ubiquitin-dependent protein catabolic process"/>
    <property type="evidence" value="ECO:0000314"/>
    <property type="project" value="UniProtKB"/>
</dbReference>
<dbReference type="CDD" id="cd15616">
    <property type="entry name" value="PHD_UHRF1"/>
    <property type="match status" value="1"/>
</dbReference>
<dbReference type="CDD" id="cd16769">
    <property type="entry name" value="RING-HC_UHRF1"/>
    <property type="match status" value="1"/>
</dbReference>
<dbReference type="CDD" id="cd20455">
    <property type="entry name" value="Tudor_UHRF1_rpt1"/>
    <property type="match status" value="1"/>
</dbReference>
<dbReference type="CDD" id="cd20457">
    <property type="entry name" value="Tudor_UHRF1_rpt2"/>
    <property type="match status" value="1"/>
</dbReference>
<dbReference type="CDD" id="cd17122">
    <property type="entry name" value="Ubl_UHRF1"/>
    <property type="match status" value="1"/>
</dbReference>
<dbReference type="DisProt" id="DP01651"/>
<dbReference type="FunFam" id="2.30.280.10:FF:000001">
    <property type="entry name" value="E3 ubiquitin-protein ligase UHRF1 isoform 1"/>
    <property type="match status" value="1"/>
</dbReference>
<dbReference type="FunFam" id="2.30.30.140:FF:000068">
    <property type="entry name" value="E3 ubiquitin-protein ligase UHRF1 isoform 1"/>
    <property type="match status" value="1"/>
</dbReference>
<dbReference type="FunFam" id="3.10.20.90:FF:000143">
    <property type="entry name" value="E3 ubiquitin-protein ligase UHRF1 isoform 1"/>
    <property type="match status" value="1"/>
</dbReference>
<dbReference type="FunFam" id="2.30.30.1150:FF:000001">
    <property type="entry name" value="E3 ubiquitin-protein ligase UHRF2 isoform X1"/>
    <property type="match status" value="1"/>
</dbReference>
<dbReference type="FunFam" id="3.30.40.10:FF:000066">
    <property type="entry name" value="E3 ubiquitin-protein ligase UHRF2 isoform X1"/>
    <property type="match status" value="1"/>
</dbReference>
<dbReference type="Gene3D" id="2.30.30.1150">
    <property type="match status" value="1"/>
</dbReference>
<dbReference type="Gene3D" id="2.30.30.140">
    <property type="match status" value="1"/>
</dbReference>
<dbReference type="Gene3D" id="3.10.20.90">
    <property type="entry name" value="Phosphatidylinositol 3-kinase Catalytic Subunit, Chain A, domain 1"/>
    <property type="match status" value="1"/>
</dbReference>
<dbReference type="Gene3D" id="2.30.280.10">
    <property type="entry name" value="SRA-YDG"/>
    <property type="match status" value="1"/>
</dbReference>
<dbReference type="Gene3D" id="3.30.40.10">
    <property type="entry name" value="Zinc/RING finger domain, C3HC4 (zinc finger)"/>
    <property type="match status" value="1"/>
</dbReference>
<dbReference type="IDEAL" id="IID00327"/>
<dbReference type="InterPro" id="IPR015947">
    <property type="entry name" value="PUA-like_sf"/>
</dbReference>
<dbReference type="InterPro" id="IPR036987">
    <property type="entry name" value="SRA-YDG_sf"/>
</dbReference>
<dbReference type="InterPro" id="IPR003105">
    <property type="entry name" value="SRA_YDG"/>
</dbReference>
<dbReference type="InterPro" id="IPR021991">
    <property type="entry name" value="TTD_dom"/>
</dbReference>
<dbReference type="InterPro" id="IPR000626">
    <property type="entry name" value="Ubiquitin-like_dom"/>
</dbReference>
<dbReference type="InterPro" id="IPR029071">
    <property type="entry name" value="Ubiquitin-like_domsf"/>
</dbReference>
<dbReference type="InterPro" id="IPR047406">
    <property type="entry name" value="Ubl_UHRF1"/>
</dbReference>
<dbReference type="InterPro" id="IPR045134">
    <property type="entry name" value="UHRF1/2-like"/>
</dbReference>
<dbReference type="InterPro" id="IPR011011">
    <property type="entry name" value="Znf_FYVE_PHD"/>
</dbReference>
<dbReference type="InterPro" id="IPR001965">
    <property type="entry name" value="Znf_PHD"/>
</dbReference>
<dbReference type="InterPro" id="IPR019787">
    <property type="entry name" value="Znf_PHD-finger"/>
</dbReference>
<dbReference type="InterPro" id="IPR001841">
    <property type="entry name" value="Znf_RING"/>
</dbReference>
<dbReference type="InterPro" id="IPR013083">
    <property type="entry name" value="Znf_RING/FYVE/PHD"/>
</dbReference>
<dbReference type="InterPro" id="IPR017907">
    <property type="entry name" value="Znf_RING_CS"/>
</dbReference>
<dbReference type="PANTHER" id="PTHR14140">
    <property type="entry name" value="E3 UBIQUITIN-PROTEIN LIGASE UHRF-RELATED"/>
    <property type="match status" value="1"/>
</dbReference>
<dbReference type="PANTHER" id="PTHR14140:SF2">
    <property type="entry name" value="E3 UBIQUITIN-PROTEIN LIGASE UHRF1"/>
    <property type="match status" value="1"/>
</dbReference>
<dbReference type="Pfam" id="PF00628">
    <property type="entry name" value="PHD"/>
    <property type="match status" value="1"/>
</dbReference>
<dbReference type="Pfam" id="PF02182">
    <property type="entry name" value="SAD_SRA"/>
    <property type="match status" value="1"/>
</dbReference>
<dbReference type="Pfam" id="PF12148">
    <property type="entry name" value="TTD"/>
    <property type="match status" value="1"/>
</dbReference>
<dbReference type="Pfam" id="PF00240">
    <property type="entry name" value="ubiquitin"/>
    <property type="match status" value="1"/>
</dbReference>
<dbReference type="SMART" id="SM00249">
    <property type="entry name" value="PHD"/>
    <property type="match status" value="1"/>
</dbReference>
<dbReference type="SMART" id="SM00184">
    <property type="entry name" value="RING"/>
    <property type="match status" value="2"/>
</dbReference>
<dbReference type="SMART" id="SM00466">
    <property type="entry name" value="SRA"/>
    <property type="match status" value="1"/>
</dbReference>
<dbReference type="SMART" id="SM00213">
    <property type="entry name" value="UBQ"/>
    <property type="match status" value="1"/>
</dbReference>
<dbReference type="SUPFAM" id="SSF57903">
    <property type="entry name" value="FYVE/PHD zinc finger"/>
    <property type="match status" value="1"/>
</dbReference>
<dbReference type="SUPFAM" id="SSF88697">
    <property type="entry name" value="PUA domain-like"/>
    <property type="match status" value="1"/>
</dbReference>
<dbReference type="SUPFAM" id="SSF57850">
    <property type="entry name" value="RING/U-box"/>
    <property type="match status" value="1"/>
</dbReference>
<dbReference type="SUPFAM" id="SSF54236">
    <property type="entry name" value="Ubiquitin-like"/>
    <property type="match status" value="1"/>
</dbReference>
<dbReference type="PROSITE" id="PS50053">
    <property type="entry name" value="UBIQUITIN_2"/>
    <property type="match status" value="1"/>
</dbReference>
<dbReference type="PROSITE" id="PS51015">
    <property type="entry name" value="YDG"/>
    <property type="match status" value="1"/>
</dbReference>
<dbReference type="PROSITE" id="PS01359">
    <property type="entry name" value="ZF_PHD_1"/>
    <property type="match status" value="1"/>
</dbReference>
<dbReference type="PROSITE" id="PS50016">
    <property type="entry name" value="ZF_PHD_2"/>
    <property type="match status" value="1"/>
</dbReference>
<dbReference type="PROSITE" id="PS00518">
    <property type="entry name" value="ZF_RING_1"/>
    <property type="match status" value="1"/>
</dbReference>
<dbReference type="PROSITE" id="PS50089">
    <property type="entry name" value="ZF_RING_2"/>
    <property type="match status" value="2"/>
</dbReference>
<keyword id="KW-0002">3D-structure</keyword>
<keyword id="KW-0007">Acetylation</keyword>
<keyword id="KW-0025">Alternative splicing</keyword>
<keyword id="KW-0131">Cell cycle</keyword>
<keyword id="KW-0156">Chromatin regulator</keyword>
<keyword id="KW-0227">DNA damage</keyword>
<keyword id="KW-0234">DNA repair</keyword>
<keyword id="KW-0238">DNA-binding</keyword>
<keyword id="KW-1017">Isopeptide bond</keyword>
<keyword id="KW-0479">Metal-binding</keyword>
<keyword id="KW-0539">Nucleus</keyword>
<keyword id="KW-0597">Phosphoprotein</keyword>
<keyword id="KW-1267">Proteomics identification</keyword>
<keyword id="KW-1185">Reference proteome</keyword>
<keyword id="KW-0677">Repeat</keyword>
<keyword id="KW-0678">Repressor</keyword>
<keyword id="KW-0804">Transcription</keyword>
<keyword id="KW-0805">Transcription regulation</keyword>
<keyword id="KW-0808">Transferase</keyword>
<keyword id="KW-0832">Ubl conjugation</keyword>
<keyword id="KW-0833">Ubl conjugation pathway</keyword>
<keyword id="KW-0862">Zinc</keyword>
<keyword id="KW-0863">Zinc-finger</keyword>
<reference key="1">
    <citation type="journal article" date="2000" name="Cancer Res.">
        <title>ICBP90, a novel human CCAAT binding protein, involved in the regulation of topoisomerase IIa expression.</title>
        <authorList>
            <person name="Hopfner R."/>
            <person name="Mousli M."/>
            <person name="Jeltsch J.-M."/>
            <person name="Voulgaris A."/>
            <person name="Lutz Y."/>
            <person name="Marin C."/>
            <person name="Bellocq J.-P."/>
            <person name="Oudet P."/>
            <person name="Bronner C."/>
        </authorList>
    </citation>
    <scope>NUCLEOTIDE SEQUENCE [MRNA] (ISOFORM 1)</scope>
    <scope>TISSUE SPECIFICITY</scope>
    <scope>DEVELOPMENTAL STAGE</scope>
    <scope>SUBCELLULAR LOCATION</scope>
    <scope>DNA-BINDING</scope>
    <scope>INDUCTION</scope>
    <scope>FUNCTION</scope>
    <source>
        <tissue>Thymus</tissue>
    </source>
</reference>
<reference key="2">
    <citation type="journal article" date="2006" name="Radiat. Res.">
        <title>Isolation and characterization of a novel human radiosusceptibility gene, NP95.</title>
        <authorList>
            <person name="Muto M."/>
            <person name="Fujimori A."/>
            <person name="Nenoi M."/>
            <person name="Daino K."/>
            <person name="Matsuda Y."/>
            <person name="Kuroiwa A."/>
            <person name="Kubo E."/>
            <person name="Kanari Y."/>
            <person name="Utsuno M."/>
            <person name="Tsuji H."/>
            <person name="Ukai H."/>
            <person name="Mita K."/>
            <person name="Takahagi M."/>
            <person name="Tatsumi K."/>
        </authorList>
    </citation>
    <scope>NUCLEOTIDE SEQUENCE [MRNA] (ISOFORM 1)</scope>
</reference>
<reference key="3">
    <citation type="submission" date="2000-06" db="EMBL/GenBank/DDBJ databases">
        <title>LMO2-induced T cell leukemias overexpress Np95, a gene containing RING and PHD zinc fingers and an ubiquitin-like domain.</title>
        <authorList>
            <person name="Davenport J.W."/>
            <person name="Fernandes E.R."/>
            <person name="Neale G.A.M."/>
            <person name="Goorha R.M."/>
        </authorList>
    </citation>
    <scope>NUCLEOTIDE SEQUENCE [MRNA] (ISOFORM 1)</scope>
</reference>
<reference key="4">
    <citation type="journal article" date="2007" name="BMC Genomics">
        <title>The full-ORF clone resource of the German cDNA consortium.</title>
        <authorList>
            <person name="Bechtel S."/>
            <person name="Rosenfelder H."/>
            <person name="Duda A."/>
            <person name="Schmidt C.P."/>
            <person name="Ernst U."/>
            <person name="Wellenreuther R."/>
            <person name="Mehrle A."/>
            <person name="Schuster C."/>
            <person name="Bahr A."/>
            <person name="Bloecker H."/>
            <person name="Heubner D."/>
            <person name="Hoerlein A."/>
            <person name="Michel G."/>
            <person name="Wedler H."/>
            <person name="Koehrer K."/>
            <person name="Ottenwaelder B."/>
            <person name="Poustka A."/>
            <person name="Wiemann S."/>
            <person name="Schupp I."/>
        </authorList>
    </citation>
    <scope>NUCLEOTIDE SEQUENCE [LARGE SCALE MRNA] (ISOFORM 1)</scope>
    <source>
        <tissue>Testis</tissue>
    </source>
</reference>
<reference key="5">
    <citation type="journal article" date="2004" name="Nat. Genet.">
        <title>Complete sequencing and characterization of 21,243 full-length human cDNAs.</title>
        <authorList>
            <person name="Ota T."/>
            <person name="Suzuki Y."/>
            <person name="Nishikawa T."/>
            <person name="Otsuki T."/>
            <person name="Sugiyama T."/>
            <person name="Irie R."/>
            <person name="Wakamatsu A."/>
            <person name="Hayashi K."/>
            <person name="Sato H."/>
            <person name="Nagai K."/>
            <person name="Kimura K."/>
            <person name="Makita H."/>
            <person name="Sekine M."/>
            <person name="Obayashi M."/>
            <person name="Nishi T."/>
            <person name="Shibahara T."/>
            <person name="Tanaka T."/>
            <person name="Ishii S."/>
            <person name="Yamamoto J."/>
            <person name="Saito K."/>
            <person name="Kawai Y."/>
            <person name="Isono Y."/>
            <person name="Nakamura Y."/>
            <person name="Nagahari K."/>
            <person name="Murakami K."/>
            <person name="Yasuda T."/>
            <person name="Iwayanagi T."/>
            <person name="Wagatsuma M."/>
            <person name="Shiratori A."/>
            <person name="Sudo H."/>
            <person name="Hosoiri T."/>
            <person name="Kaku Y."/>
            <person name="Kodaira H."/>
            <person name="Kondo H."/>
            <person name="Sugawara M."/>
            <person name="Takahashi M."/>
            <person name="Kanda K."/>
            <person name="Yokoi T."/>
            <person name="Furuya T."/>
            <person name="Kikkawa E."/>
            <person name="Omura Y."/>
            <person name="Abe K."/>
            <person name="Kamihara K."/>
            <person name="Katsuta N."/>
            <person name="Sato K."/>
            <person name="Tanikawa M."/>
            <person name="Yamazaki M."/>
            <person name="Ninomiya K."/>
            <person name="Ishibashi T."/>
            <person name="Yamashita H."/>
            <person name="Murakawa K."/>
            <person name="Fujimori K."/>
            <person name="Tanai H."/>
            <person name="Kimata M."/>
            <person name="Watanabe M."/>
            <person name="Hiraoka S."/>
            <person name="Chiba Y."/>
            <person name="Ishida S."/>
            <person name="Ono Y."/>
            <person name="Takiguchi S."/>
            <person name="Watanabe S."/>
            <person name="Yosida M."/>
            <person name="Hotuta T."/>
            <person name="Kusano J."/>
            <person name="Kanehori K."/>
            <person name="Takahashi-Fujii A."/>
            <person name="Hara H."/>
            <person name="Tanase T.-O."/>
            <person name="Nomura Y."/>
            <person name="Togiya S."/>
            <person name="Komai F."/>
            <person name="Hara R."/>
            <person name="Takeuchi K."/>
            <person name="Arita M."/>
            <person name="Imose N."/>
            <person name="Musashino K."/>
            <person name="Yuuki H."/>
            <person name="Oshima A."/>
            <person name="Sasaki N."/>
            <person name="Aotsuka S."/>
            <person name="Yoshikawa Y."/>
            <person name="Matsunawa H."/>
            <person name="Ichihara T."/>
            <person name="Shiohata N."/>
            <person name="Sano S."/>
            <person name="Moriya S."/>
            <person name="Momiyama H."/>
            <person name="Satoh N."/>
            <person name="Takami S."/>
            <person name="Terashima Y."/>
            <person name="Suzuki O."/>
            <person name="Nakagawa S."/>
            <person name="Senoh A."/>
            <person name="Mizoguchi H."/>
            <person name="Goto Y."/>
            <person name="Shimizu F."/>
            <person name="Wakebe H."/>
            <person name="Hishigaki H."/>
            <person name="Watanabe T."/>
            <person name="Sugiyama A."/>
            <person name="Takemoto M."/>
            <person name="Kawakami B."/>
            <person name="Yamazaki M."/>
            <person name="Watanabe K."/>
            <person name="Kumagai A."/>
            <person name="Itakura S."/>
            <person name="Fukuzumi Y."/>
            <person name="Fujimori Y."/>
            <person name="Komiyama M."/>
            <person name="Tashiro H."/>
            <person name="Tanigami A."/>
            <person name="Fujiwara T."/>
            <person name="Ono T."/>
            <person name="Yamada K."/>
            <person name="Fujii Y."/>
            <person name="Ozaki K."/>
            <person name="Hirao M."/>
            <person name="Ohmori Y."/>
            <person name="Kawabata A."/>
            <person name="Hikiji T."/>
            <person name="Kobatake N."/>
            <person name="Inagaki H."/>
            <person name="Ikema Y."/>
            <person name="Okamoto S."/>
            <person name="Okitani R."/>
            <person name="Kawakami T."/>
            <person name="Noguchi S."/>
            <person name="Itoh T."/>
            <person name="Shigeta K."/>
            <person name="Senba T."/>
            <person name="Matsumura K."/>
            <person name="Nakajima Y."/>
            <person name="Mizuno T."/>
            <person name="Morinaga M."/>
            <person name="Sasaki M."/>
            <person name="Togashi T."/>
            <person name="Oyama M."/>
            <person name="Hata H."/>
            <person name="Watanabe M."/>
            <person name="Komatsu T."/>
            <person name="Mizushima-Sugano J."/>
            <person name="Satoh T."/>
            <person name="Shirai Y."/>
            <person name="Takahashi Y."/>
            <person name="Nakagawa K."/>
            <person name="Okumura K."/>
            <person name="Nagase T."/>
            <person name="Nomura N."/>
            <person name="Kikuchi H."/>
            <person name="Masuho Y."/>
            <person name="Yamashita R."/>
            <person name="Nakai K."/>
            <person name="Yada T."/>
            <person name="Nakamura Y."/>
            <person name="Ohara O."/>
            <person name="Isogai T."/>
            <person name="Sugano S."/>
        </authorList>
    </citation>
    <scope>NUCLEOTIDE SEQUENCE [LARGE SCALE MRNA] (ISOFORM 1)</scope>
    <scope>VARIANTS LYS-379 AND THR-638</scope>
</reference>
<reference key="6">
    <citation type="submission" date="2004-10" db="EMBL/GenBank/DDBJ databases">
        <authorList>
            <consortium name="NIEHS SNPs program"/>
        </authorList>
    </citation>
    <scope>NUCLEOTIDE SEQUENCE [GENOMIC DNA]</scope>
    <scope>VARIANTS HIS-240; LYS-379; THR-638; MET-642 AND PHE-713</scope>
</reference>
<reference key="7">
    <citation type="journal article" date="2004" name="Nature">
        <title>The DNA sequence and biology of human chromosome 19.</title>
        <authorList>
            <person name="Grimwood J."/>
            <person name="Gordon L.A."/>
            <person name="Olsen A.S."/>
            <person name="Terry A."/>
            <person name="Schmutz J."/>
            <person name="Lamerdin J.E."/>
            <person name="Hellsten U."/>
            <person name="Goodstein D."/>
            <person name="Couronne O."/>
            <person name="Tran-Gyamfi M."/>
            <person name="Aerts A."/>
            <person name="Altherr M."/>
            <person name="Ashworth L."/>
            <person name="Bajorek E."/>
            <person name="Black S."/>
            <person name="Branscomb E."/>
            <person name="Caenepeel S."/>
            <person name="Carrano A.V."/>
            <person name="Caoile C."/>
            <person name="Chan Y.M."/>
            <person name="Christensen M."/>
            <person name="Cleland C.A."/>
            <person name="Copeland A."/>
            <person name="Dalin E."/>
            <person name="Dehal P."/>
            <person name="Denys M."/>
            <person name="Detter J.C."/>
            <person name="Escobar J."/>
            <person name="Flowers D."/>
            <person name="Fotopulos D."/>
            <person name="Garcia C."/>
            <person name="Georgescu A.M."/>
            <person name="Glavina T."/>
            <person name="Gomez M."/>
            <person name="Gonzales E."/>
            <person name="Groza M."/>
            <person name="Hammon N."/>
            <person name="Hawkins T."/>
            <person name="Haydu L."/>
            <person name="Ho I."/>
            <person name="Huang W."/>
            <person name="Israni S."/>
            <person name="Jett J."/>
            <person name="Kadner K."/>
            <person name="Kimball H."/>
            <person name="Kobayashi A."/>
            <person name="Larionov V."/>
            <person name="Leem S.-H."/>
            <person name="Lopez F."/>
            <person name="Lou Y."/>
            <person name="Lowry S."/>
            <person name="Malfatti S."/>
            <person name="Martinez D."/>
            <person name="McCready P.M."/>
            <person name="Medina C."/>
            <person name="Morgan J."/>
            <person name="Nelson K."/>
            <person name="Nolan M."/>
            <person name="Ovcharenko I."/>
            <person name="Pitluck S."/>
            <person name="Pollard M."/>
            <person name="Popkie A.P."/>
            <person name="Predki P."/>
            <person name="Quan G."/>
            <person name="Ramirez L."/>
            <person name="Rash S."/>
            <person name="Retterer J."/>
            <person name="Rodriguez A."/>
            <person name="Rogers S."/>
            <person name="Salamov A."/>
            <person name="Salazar A."/>
            <person name="She X."/>
            <person name="Smith D."/>
            <person name="Slezak T."/>
            <person name="Solovyev V."/>
            <person name="Thayer N."/>
            <person name="Tice H."/>
            <person name="Tsai M."/>
            <person name="Ustaszewska A."/>
            <person name="Vo N."/>
            <person name="Wagner M."/>
            <person name="Wheeler J."/>
            <person name="Wu K."/>
            <person name="Xie G."/>
            <person name="Yang J."/>
            <person name="Dubchak I."/>
            <person name="Furey T.S."/>
            <person name="DeJong P."/>
            <person name="Dickson M."/>
            <person name="Gordon D."/>
            <person name="Eichler E.E."/>
            <person name="Pennacchio L.A."/>
            <person name="Richardson P."/>
            <person name="Stubbs L."/>
            <person name="Rokhsar D.S."/>
            <person name="Myers R.M."/>
            <person name="Rubin E.M."/>
            <person name="Lucas S.M."/>
        </authorList>
    </citation>
    <scope>NUCLEOTIDE SEQUENCE [LARGE SCALE GENOMIC DNA]</scope>
</reference>
<reference key="8">
    <citation type="submission" date="2005-07" db="EMBL/GenBank/DDBJ databases">
        <authorList>
            <person name="Mural R.J."/>
            <person name="Istrail S."/>
            <person name="Sutton G.G."/>
            <person name="Florea L."/>
            <person name="Halpern A.L."/>
            <person name="Mobarry C.M."/>
            <person name="Lippert R."/>
            <person name="Walenz B."/>
            <person name="Shatkay H."/>
            <person name="Dew I."/>
            <person name="Miller J.R."/>
            <person name="Flanigan M.J."/>
            <person name="Edwards N.J."/>
            <person name="Bolanos R."/>
            <person name="Fasulo D."/>
            <person name="Halldorsson B.V."/>
            <person name="Hannenhalli S."/>
            <person name="Turner R."/>
            <person name="Yooseph S."/>
            <person name="Lu F."/>
            <person name="Nusskern D.R."/>
            <person name="Shue B.C."/>
            <person name="Zheng X.H."/>
            <person name="Zhong F."/>
            <person name="Delcher A.L."/>
            <person name="Huson D.H."/>
            <person name="Kravitz S.A."/>
            <person name="Mouchard L."/>
            <person name="Reinert K."/>
            <person name="Remington K.A."/>
            <person name="Clark A.G."/>
            <person name="Waterman M.S."/>
            <person name="Eichler E.E."/>
            <person name="Adams M.D."/>
            <person name="Hunkapiller M.W."/>
            <person name="Myers E.W."/>
            <person name="Venter J.C."/>
        </authorList>
    </citation>
    <scope>NUCLEOTIDE SEQUENCE [LARGE SCALE GENOMIC DNA]</scope>
</reference>
<reference key="9">
    <citation type="journal article" date="2004" name="Genome Res.">
        <title>The status, quality, and expansion of the NIH full-length cDNA project: the Mammalian Gene Collection (MGC).</title>
        <authorList>
            <consortium name="The MGC Project Team"/>
        </authorList>
    </citation>
    <scope>NUCLEOTIDE SEQUENCE [LARGE SCALE MRNA] (ISOFORM 2)</scope>
</reference>
<reference key="10">
    <citation type="journal article" date="2003" name="Br. J. Cancer">
        <title>ICBP90 belongs to a new family of proteins with an expression that is deregulated in cancer cells.</title>
        <authorList>
            <person name="Mousli M."/>
            <person name="Hopfner R."/>
            <person name="Abbady A.-Q."/>
            <person name="Monte D."/>
            <person name="Jeanblanc M."/>
            <person name="Oudet P."/>
            <person name="Louis B."/>
            <person name="Bronner C."/>
        </authorList>
    </citation>
    <scope>INDUCTION</scope>
    <scope>TISSUE SPECIFICITY</scope>
</reference>
<reference key="11">
    <citation type="journal article" date="2004" name="Biochem. Biophys. Res. Commun.">
        <title>Phosphorylation of ICBP90 by protein kinase A enhances topoisomerase IIalpha expression.</title>
        <authorList>
            <person name="Trotzier M.-A."/>
            <person name="Bronner C."/>
            <person name="Bathami K."/>
            <person name="Mathieu E."/>
            <person name="Abbady A.-Q."/>
            <person name="Jeanblanc M."/>
            <person name="Muller C.D."/>
            <person name="Rochette-Egly C."/>
            <person name="Mousli M."/>
        </authorList>
    </citation>
    <scope>PHOSPHORYLATION</scope>
    <scope>PHOSPHORYLATION AT SER-298</scope>
    <scope>MUTAGENESIS OF SER-298; SER-651 AND SER-666</scope>
</reference>
<reference key="12">
    <citation type="journal article" date="2004" name="Genes Cells">
        <title>Down-regulation of nuclear protein ICBP90 by p53/p21Cip1/WAF1-dependent DNA-damage checkpoint signals contributes to cell cycle arrest at G1/S transition.</title>
        <authorList>
            <person name="Arima Y."/>
            <person name="Hirota T."/>
            <person name="Bronner C."/>
            <person name="Mousli M."/>
            <person name="Fujiwara T."/>
            <person name="Niwa S."/>
            <person name="Ishikawa H."/>
            <person name="Saya H."/>
        </authorList>
    </citation>
    <scope>INDUCTION</scope>
    <scope>UBIQUITINATION</scope>
    <scope>FUNCTION</scope>
</reference>
<reference key="13">
    <citation type="journal article" date="2004" name="Oncogene">
        <title>ICBP90, an E2F-1 target, recruits HDAC1 and binds to methyl-CpG through its SRA domain.</title>
        <authorList>
            <person name="Unoki M."/>
            <person name="Nishidate T."/>
            <person name="Nakamura Y."/>
        </authorList>
    </citation>
    <scope>FUNCTION</scope>
    <scope>INDUCTION</scope>
    <scope>TISSUE SPECIFICITY</scope>
    <scope>DNA-BINDING</scope>
    <scope>INTERACTION WITH HDAC1 AND BLTP3A</scope>
</reference>
<reference key="14">
    <citation type="journal article" date="2006" name="Cell">
        <title>Global, in vivo, and site-specific phosphorylation dynamics in signaling networks.</title>
        <authorList>
            <person name="Olsen J.V."/>
            <person name="Blagoev B."/>
            <person name="Gnad F."/>
            <person name="Macek B."/>
            <person name="Kumar C."/>
            <person name="Mortensen P."/>
            <person name="Mann M."/>
        </authorList>
    </citation>
    <scope>PHOSPHORYLATION [LARGE SCALE ANALYSIS] AT SER-287 AND SER-639</scope>
    <scope>IDENTIFICATION BY MASS SPECTROMETRY [LARGE SCALE ANALYSIS]</scope>
    <source>
        <tissue>Cervix carcinoma</tissue>
    </source>
</reference>
<reference key="15">
    <citation type="journal article" date="2006" name="Nat. Biotechnol.">
        <title>A probability-based approach for high-throughput protein phosphorylation analysis and site localization.</title>
        <authorList>
            <person name="Beausoleil S.A."/>
            <person name="Villen J."/>
            <person name="Gerber S.A."/>
            <person name="Rush J."/>
            <person name="Gygi S.P."/>
        </authorList>
    </citation>
    <scope>PHOSPHORYLATION [LARGE SCALE ANALYSIS] AT SER-639</scope>
    <scope>IDENTIFICATION BY MASS SPECTROMETRY [LARGE SCALE ANALYSIS]</scope>
    <source>
        <tissue>Cervix carcinoma</tissue>
    </source>
</reference>
<reference key="16">
    <citation type="journal article" date="2007" name="Science">
        <title>UHRF1 plays a role in maintaining DNA methylation in mammalian cells.</title>
        <authorList>
            <person name="Bostick M."/>
            <person name="Kim J.K."/>
            <person name="Esteve P.O."/>
            <person name="Clark A."/>
            <person name="Pradhan S."/>
            <person name="Jacobsen S.E."/>
        </authorList>
    </citation>
    <scope>FUNCTION</scope>
    <scope>SUBCELLULAR LOCATION</scope>
    <scope>INTERACTION WITH DNMT1</scope>
</reference>
<reference key="17">
    <citation type="journal article" date="2008" name="J. Proteome Res.">
        <title>Combining protein-based IMAC, peptide-based IMAC, and MudPIT for efficient phosphoproteomic analysis.</title>
        <authorList>
            <person name="Cantin G.T."/>
            <person name="Yi W."/>
            <person name="Lu B."/>
            <person name="Park S.K."/>
            <person name="Xu T."/>
            <person name="Lee J.-D."/>
            <person name="Yates J.R. III"/>
        </authorList>
    </citation>
    <scope>PHOSPHORYLATION [LARGE SCALE ANALYSIS] AT SER-287</scope>
    <scope>IDENTIFICATION BY MASS SPECTROMETRY [LARGE SCALE ANALYSIS]</scope>
    <source>
        <tissue>Cervix carcinoma</tissue>
    </source>
</reference>
<reference key="18">
    <citation type="journal article" date="2008" name="Mol. Cell. Biol.">
        <title>ICBP90, a novel methyl K9 H3 binding protein linking protein ubiquitination with heterochromatin formation.</title>
        <authorList>
            <person name="Karagianni P."/>
            <person name="Amazit L."/>
            <person name="Qin J."/>
            <person name="Wong J."/>
        </authorList>
    </citation>
    <scope>FUNCTION</scope>
    <scope>SUBCELLULAR LOCATION</scope>
    <scope>AUTOUBIQUITINATION</scope>
</reference>
<reference key="19">
    <citation type="journal article" date="2008" name="Proc. Natl. Acad. Sci. U.S.A.">
        <title>A quantitative atlas of mitotic phosphorylation.</title>
        <authorList>
            <person name="Dephoure N."/>
            <person name="Zhou C."/>
            <person name="Villen J."/>
            <person name="Beausoleil S.A."/>
            <person name="Bakalarski C.E."/>
            <person name="Elledge S.J."/>
            <person name="Gygi S.P."/>
        </authorList>
    </citation>
    <scope>PHOSPHORYLATION [LARGE SCALE ANALYSIS] AT SER-76; SER-91 AND SER-707</scope>
    <scope>IDENTIFICATION BY MASS SPECTROMETRY [LARGE SCALE ANALYSIS]</scope>
    <source>
        <tissue>Cervix carcinoma</tissue>
    </source>
</reference>
<reference key="20">
    <citation type="journal article" date="2009" name="Br. J. Cancer">
        <title>UHRF1 is a novel molecular marker for diagnosis and the prognosis of bladder cancer.</title>
        <authorList>
            <person name="Unoki M."/>
            <person name="Kelly J.D."/>
            <person name="Neal D.E."/>
            <person name="Ponder B.A."/>
            <person name="Nakamura Y."/>
            <person name="Hamamoto R."/>
        </authorList>
    </citation>
    <scope>INVOLVEMENT IN CANCER</scope>
</reference>
<reference key="21">
    <citation type="journal article" date="2009" name="Nucleic Acids Res.">
        <title>UHRF1 binds G9a and participates in p21 transcriptional regulation in mammalian cells.</title>
        <authorList>
            <person name="Kim J.K."/>
            <person name="Esteve P.O."/>
            <person name="Jacobsen S.E."/>
            <person name="Pradhan S."/>
        </authorList>
    </citation>
    <scope>FUNCTION</scope>
    <scope>SUBCELLULAR LOCATION</scope>
    <scope>INTERACTION WITH EHMT2</scope>
</reference>
<reference key="22">
    <citation type="journal article" date="2009" name="Sci. Signal.">
        <title>Quantitative phosphoproteomic analysis of T cell receptor signaling reveals system-wide modulation of protein-protein interactions.</title>
        <authorList>
            <person name="Mayya V."/>
            <person name="Lundgren D.H."/>
            <person name="Hwang S.-I."/>
            <person name="Rezaul K."/>
            <person name="Wu L."/>
            <person name="Eng J.K."/>
            <person name="Rodionov V."/>
            <person name="Han D.K."/>
        </authorList>
    </citation>
    <scope>PHOSPHORYLATION [LARGE SCALE ANALYSIS] AT SER-287</scope>
    <scope>IDENTIFICATION BY MASS SPECTROMETRY [LARGE SCALE ANALYSIS]</scope>
    <source>
        <tissue>Leukemic T-cell</tissue>
    </source>
</reference>
<reference key="23">
    <citation type="journal article" date="2009" name="Science">
        <title>Lysine acetylation targets protein complexes and co-regulates major cellular functions.</title>
        <authorList>
            <person name="Choudhary C."/>
            <person name="Kumar C."/>
            <person name="Gnad F."/>
            <person name="Nielsen M.L."/>
            <person name="Rehman M."/>
            <person name="Walther T.C."/>
            <person name="Olsen J.V."/>
            <person name="Mann M."/>
        </authorList>
    </citation>
    <scope>ACETYLATION [LARGE SCALE ANALYSIS] AT LYS-399 AND LYS-546</scope>
    <scope>IDENTIFICATION BY MASS SPECTROMETRY [LARGE SCALE ANALYSIS]</scope>
</reference>
<reference key="24">
    <citation type="journal article" date="2010" name="Nucleic Acids Res.">
        <title>The multi-domain protein Np95 connects DNA methylation and histone modification.</title>
        <authorList>
            <person name="Rottach A."/>
            <person name="Frauer C."/>
            <person name="Pichler G."/>
            <person name="Bonapace I.M."/>
            <person name="Spada F."/>
            <person name="Leonhardt H."/>
        </authorList>
    </citation>
    <scope>MUTAGENESIS OF TYR-188 AND TYR-191</scope>
</reference>
<reference key="25">
    <citation type="journal article" date="2010" name="Sci. Signal.">
        <title>Quantitative phosphoproteomics reveals widespread full phosphorylation site occupancy during mitosis.</title>
        <authorList>
            <person name="Olsen J.V."/>
            <person name="Vermeulen M."/>
            <person name="Santamaria A."/>
            <person name="Kumar C."/>
            <person name="Miller M.L."/>
            <person name="Jensen L.J."/>
            <person name="Gnad F."/>
            <person name="Cox J."/>
            <person name="Jensen T.S."/>
            <person name="Nigg E.A."/>
            <person name="Brunak S."/>
            <person name="Mann M."/>
        </authorList>
    </citation>
    <scope>PHOSPHORYLATION [LARGE SCALE ANALYSIS] AT SER-76; SER-287; SER-639 AND SER-707</scope>
    <scope>IDENTIFICATION BY MASS SPECTROMETRY [LARGE SCALE ANALYSIS]</scope>
    <source>
        <tissue>Cervix carcinoma</tissue>
    </source>
</reference>
<reference key="26">
    <citation type="journal article" date="2011" name="BMC Syst. Biol.">
        <title>Initial characterization of the human central proteome.</title>
        <authorList>
            <person name="Burkard T.R."/>
            <person name="Planyavsky M."/>
            <person name="Kaupe I."/>
            <person name="Breitwieser F.P."/>
            <person name="Buerckstuemmer T."/>
            <person name="Bennett K.L."/>
            <person name="Superti-Furga G."/>
            <person name="Colinge J."/>
        </authorList>
    </citation>
    <scope>IDENTIFICATION BY MASS SPECTROMETRY [LARGE SCALE ANALYSIS]</scope>
</reference>
<reference key="27">
    <citation type="journal article" date="2011" name="Nucleic Acids Res.">
        <title>The USP7/Dnmt1 complex stimulates the DNA methylation activity of Dnmt1 and regulates the stability of UHRF1.</title>
        <authorList>
            <person name="Felle M."/>
            <person name="Joppien S."/>
            <person name="Nemeth A."/>
            <person name="Diermeier S."/>
            <person name="Thalhammer V."/>
            <person name="Dobner T."/>
            <person name="Kremmer E."/>
            <person name="Kappler R."/>
            <person name="Langst G."/>
        </authorList>
    </citation>
    <scope>FUNCTION</scope>
    <scope>AUTOUBIQUITINATION</scope>
    <scope>DEUBIQUITINATION BY USP7</scope>
    <scope>INTERACTION WITH USP7 AND DNMT1</scope>
</reference>
<reference key="28">
    <citation type="journal article" date="2011" name="PLoS ONE">
        <title>Recognition of 5-hydroxymethylcytosine by the Uhrf1 SRA domain.</title>
        <authorList>
            <person name="Frauer C."/>
            <person name="Hoffmann T."/>
            <person name="Bultmann S."/>
            <person name="Casa V."/>
            <person name="Cardoso M.C."/>
            <person name="Antes I."/>
            <person name="Leonhardt H."/>
        </authorList>
    </citation>
    <scope>HYDROXYMETHYLCYTOSINE-BINDING</scope>
</reference>
<reference key="29">
    <citation type="journal article" date="2011" name="Sci. Signal.">
        <title>System-wide temporal characterization of the proteome and phosphoproteome of human embryonic stem cell differentiation.</title>
        <authorList>
            <person name="Rigbolt K.T."/>
            <person name="Prokhorova T.A."/>
            <person name="Akimov V."/>
            <person name="Henningsen J."/>
            <person name="Johansen P.T."/>
            <person name="Kratchmarova I."/>
            <person name="Kassem M."/>
            <person name="Mann M."/>
            <person name="Olsen J.V."/>
            <person name="Blagoev B."/>
        </authorList>
    </citation>
    <scope>PHOSPHORYLATION [LARGE SCALE ANALYSIS] AT SER-287 AND SER-651</scope>
    <scope>IDENTIFICATION BY MASS SPECTROMETRY [LARGE SCALE ANALYSIS]</scope>
</reference>
<reference key="30">
    <citation type="journal article" date="2013" name="J. Proteome Res.">
        <title>Toward a comprehensive characterization of a human cancer cell phosphoproteome.</title>
        <authorList>
            <person name="Zhou H."/>
            <person name="Di Palma S."/>
            <person name="Preisinger C."/>
            <person name="Peng M."/>
            <person name="Polat A.N."/>
            <person name="Heck A.J."/>
            <person name="Mohammed S."/>
        </authorList>
    </citation>
    <scope>PHOSPHORYLATION [LARGE SCALE ANALYSIS] AT SER-76; SER-91; SER-287; SER-368; SER-639; SER-707 AND SER-709</scope>
    <scope>IDENTIFICATION BY MASS SPECTROMETRY [LARGE SCALE ANALYSIS]</scope>
    <source>
        <tissue>Cervix carcinoma</tissue>
        <tissue>Erythroleukemia</tissue>
    </source>
</reference>
<reference key="31">
    <citation type="journal article" date="2013" name="Oncogene">
        <title>The epigenetic regulator UHRF1 promotes ubiquitination-mediated degradation of the tumor-suppressor protein promyelocytic leukemia protein.</title>
        <authorList>
            <person name="Guan D."/>
            <person name="Factor D."/>
            <person name="Liu Y."/>
            <person name="Wang Z."/>
            <person name="Kao H.Y."/>
        </authorList>
    </citation>
    <scope>FUNCTION</scope>
    <scope>INTERACTION WITH PML</scope>
    <scope>MUTAGENESIS OF HIS-741</scope>
</reference>
<reference key="32">
    <citation type="journal article" date="2012" name="Oncogene">
        <title>UHRF1 coordinates peroxisome proliferator activated receptor gamma (PPARG) epigenetic silencing and mediates colorectal cancer progression.</title>
        <authorList>
            <person name="Sabatino L."/>
            <person name="Fucci A."/>
            <person name="Pancione M."/>
            <person name="Carafa V."/>
            <person name="Nebbioso A."/>
            <person name="Pistore C."/>
            <person name="Babbio F."/>
            <person name="Votino C."/>
            <person name="Laudanna C."/>
            <person name="Ceccarelli M."/>
            <person name="Altucci L."/>
            <person name="Bonapace I.M."/>
            <person name="Colantuoni V."/>
        </authorList>
    </citation>
    <scope>INVOLVEMENT IN CANCER</scope>
</reference>
<reference key="33">
    <citation type="journal article" date="2012" name="Oncogene">
        <title>The SRA protein UHRF1 promotes epigenetic crosstalks and is involved in prostate cancer progression.</title>
        <authorList>
            <person name="Babbio F."/>
            <person name="Pistore C."/>
            <person name="Curti L."/>
            <person name="Castiglioni I."/>
            <person name="Kunderfranco P."/>
            <person name="Brino L."/>
            <person name="Oudet P."/>
            <person name="Seiler R."/>
            <person name="Thalman G.N."/>
            <person name="Roggero E."/>
            <person name="Sarti M."/>
            <person name="Pinton S."/>
            <person name="Mello-Grand M."/>
            <person name="Chiorino G."/>
            <person name="Catapano C.V."/>
            <person name="Carbone G.M."/>
            <person name="Bonapace I.M."/>
        </authorList>
    </citation>
    <scope>INVOLVEMENT IN CANCER</scope>
</reference>
<reference key="34">
    <citation type="journal article" date="2012" name="Proc. Natl. Acad. Sci. U.S.A.">
        <title>M phase phosphorylation of the epigenetic regulator UHRF1 regulates its physical association with the deubiquitylase USP7 and stability.</title>
        <authorList>
            <person name="Ma H."/>
            <person name="Chen H."/>
            <person name="Guo X."/>
            <person name="Wang Z."/>
            <person name="Sowa M.E."/>
            <person name="Zheng L."/>
            <person name="Hu S."/>
            <person name="Zeng P."/>
            <person name="Guo R."/>
            <person name="Diao J."/>
            <person name="Lan F."/>
            <person name="Harper J.W."/>
            <person name="Shi Y.G."/>
            <person name="Xu Y."/>
            <person name="Shi Y."/>
        </authorList>
    </citation>
    <scope>AUTOUBIQUITINATION</scope>
    <scope>DEUBIQUITINATION BY USP7</scope>
    <scope>INTERACTION WITH USP7</scope>
    <scope>PHOSPHORYLATION AT SER-639</scope>
    <scope>MUTAGENESIS OF SER-639</scope>
</reference>
<reference key="35">
    <citation type="journal article" date="2014" name="Nat. Struct. Mol. Biol.">
        <title>Uncovering global SUMOylation signaling networks in a site-specific manner.</title>
        <authorList>
            <person name="Hendriks I.A."/>
            <person name="D'Souza R.C."/>
            <person name="Yang B."/>
            <person name="Verlaan-de Vries M."/>
            <person name="Mann M."/>
            <person name="Vertegaal A.C."/>
        </authorList>
    </citation>
    <scope>SUMOYLATION [LARGE SCALE ANALYSIS] AT LYS-385; LYS-546 AND LYS-670</scope>
    <scope>IDENTIFICATION BY MASS SPECTROMETRY [LARGE SCALE ANALYSIS]</scope>
</reference>
<reference key="36">
    <citation type="journal article" date="2017" name="Nat. Struct. Mol. Biol.">
        <title>Site-specific mapping of the human SUMO proteome reveals co-modification with phosphorylation.</title>
        <authorList>
            <person name="Hendriks I.A."/>
            <person name="Lyon D."/>
            <person name="Young C."/>
            <person name="Jensen L.J."/>
            <person name="Vertegaal A.C."/>
            <person name="Nielsen M.L."/>
        </authorList>
    </citation>
    <scope>SUMOYLATION [LARGE SCALE ANALYSIS] AT LYS-279 AND LYS-670</scope>
    <scope>IDENTIFICATION BY MASS SPECTROMETRY [LARGE SCALE ANALYSIS]</scope>
</reference>
<reference key="37">
    <citation type="journal article" date="2018" name="PLoS Genet.">
        <title>Identification of UHRF2 as a novel DNA interstrand crosslink sensor protein.</title>
        <authorList>
            <person name="Motnenko A."/>
            <person name="Liang C.C."/>
            <person name="Yang D."/>
            <person name="Lopez-Martinez D."/>
            <person name="Yoshikawa Y."/>
            <person name="Zhan B."/>
            <person name="Ward K.E."/>
            <person name="Tian J."/>
            <person name="Haas W."/>
            <person name="Spingardi P."/>
            <person name="Kessler B.M."/>
            <person name="Kriaucionis S."/>
            <person name="Gygi S.P."/>
            <person name="Cohn M.A."/>
        </authorList>
    </citation>
    <scope>FUNCTION</scope>
    <scope>INTERACTION WITH UHRF2 AND FANCD2</scope>
    <scope>SUBCELLULAR LOCATION</scope>
</reference>
<reference key="38">
    <citation type="journal article" date="2020" name="Oncogene">
        <title>The EGFR-ZNF263 signaling axis silences SIX3 in glioblastoma epigenetically.</title>
        <authorList>
            <person name="Yu Z."/>
            <person name="Feng J."/>
            <person name="Wang W."/>
            <person name="Deng Z."/>
            <person name="Zhang Y."/>
            <person name="Xiao L."/>
            <person name="Wang Z."/>
            <person name="Liu C."/>
            <person name="Liu Q."/>
            <person name="Chen S."/>
            <person name="Wu M."/>
        </authorList>
    </citation>
    <scope>INTERACTION WITH ZNF263</scope>
</reference>
<reference key="39">
    <citation type="journal article" date="2023" name="J. Cell Biol.">
        <title>UHRF1 promotes spindle assembly and chromosome congression by catalyzing EG5 polyubiquitination.</title>
        <authorList>
            <person name="Qi X."/>
            <person name="Liu Y."/>
            <person name="Peng Y."/>
            <person name="Fu Y."/>
            <person name="Fu Y."/>
            <person name="Yin L."/>
            <person name="Li X."/>
        </authorList>
    </citation>
    <scope>FUNCTION</scope>
    <scope>CATALYTIC ACTIVITY</scope>
</reference>
<reference key="40">
    <citation type="submission" date="2006-01" db="PDB data bank">
        <title>Ubiquitin-like domain of human nuclear zinc finger protein NP95.</title>
        <authorList>
            <consortium name="Structural genomics consortium (SGC)"/>
        </authorList>
    </citation>
    <scope>X-RAY CRYSTALLOGRAPHY (2.0 ANGSTROMS) OF 1-76</scope>
</reference>
<reference key="41">
    <citation type="journal article" date="2008" name="Acta Crystallogr. F">
        <title>Expression, purification, crystallization and preliminary crystallographic study of the SRA domain of the human UHRF1 protein.</title>
        <authorList>
            <person name="Delagoutte B."/>
            <person name="Lallous N."/>
            <person name="Birck C."/>
            <person name="Oudet P."/>
            <person name="Samama J.P."/>
        </authorList>
    </citation>
    <scope>X-RAY CRYSTALLOGRAPHY (1.9 ANGSTROMS) OF 408-643</scope>
</reference>
<reference key="42">
    <citation type="journal article" date="2008" name="J. Biol. Chem.">
        <title>Structure and hemimethylated CpG binding of the SRA domain from human UHRF1.</title>
        <authorList>
            <person name="Qian C."/>
            <person name="Li S."/>
            <person name="Jakoncic J."/>
            <person name="Zeng L."/>
            <person name="Walsh M.J."/>
            <person name="Zhou M.M."/>
        </authorList>
    </citation>
    <scope>X-RAY CRYSTALLOGRAPHY (1.95 ANGSTROMS) OF 414-617</scope>
    <scope>MUTAGENESIS OF ARG-433; ARG-443; TYR-466 AND ARG-491</scope>
</reference>
<reference key="43">
    <citation type="journal article" date="2008" name="Nature">
        <title>Structural basis for recognition of hemi-methylated DNA by the SRA domain of human UHRF1.</title>
        <authorList>
            <person name="Avvakumov G.V."/>
            <person name="Walker J.R."/>
            <person name="Xue S."/>
            <person name="Li Y."/>
            <person name="Duan S."/>
            <person name="Bronner C."/>
            <person name="Arrowsmith C.H."/>
            <person name="Dhe-Paganon S."/>
        </authorList>
    </citation>
    <scope>X-RAY CRYSTALLOGRAPHY (1.7 ANGSTROMS) OF 414-617 IN COMPLEX WITH HEMIMETHYLATED DNA</scope>
    <scope>MUTAGENESIS OF GLY-448; ASP-469; ASN-489 AND ARG-491</scope>
</reference>
<reference key="44">
    <citation type="journal article" date="2011" name="Cell Res.">
        <title>Crystal structure of PHD domain of UHRF1 and insights into recognition of unmodified histone H3 arginine residue 2.</title>
        <authorList>
            <person name="Hu L."/>
            <person name="Li Z."/>
            <person name="Wang P."/>
            <person name="Lin Y."/>
            <person name="Xu Y."/>
        </authorList>
    </citation>
    <scope>X-RAY CRYSTALLOGRAPHY (1.8 ANGSTROMS) OF 298-366</scope>
    <scope>MUTAGENESIS OF ASP-334 AND ASP-337</scope>
</reference>
<reference key="45">
    <citation type="journal article" date="2011" name="Cell Res.">
        <title>Structural basis for site-specific reading of unmodified R2 of histone H3 tail by UHRF1 PHD finger.</title>
        <authorList>
            <person name="Wang C."/>
            <person name="Shen J."/>
            <person name="Yang Z."/>
            <person name="Chen P."/>
            <person name="Zhao B."/>
            <person name="Hu W."/>
            <person name="Lan W."/>
            <person name="Tong X."/>
            <person name="Wu H."/>
            <person name="Li G."/>
            <person name="Cao C."/>
        </authorList>
    </citation>
    <scope>STRUCTURE BY NMR OF 298-366</scope>
    <scope>MUTAGENESIS OF ASP-334 AND ASP-337</scope>
</reference>
<reference key="46">
    <citation type="journal article" date="2011" name="J. Biol. Chem.">
        <title>Recognition of multivalent histone states associated with heterochromatin by UHRF1 protein.</title>
        <authorList>
            <person name="Nady N."/>
            <person name="Lemak A."/>
            <person name="Walker J.R."/>
            <person name="Avvakumov G.V."/>
            <person name="Kareta M.S."/>
            <person name="Achour M."/>
            <person name="Xue S."/>
            <person name="Duan S."/>
            <person name="Allali-Hassani A."/>
            <person name="Zuo X."/>
            <person name="Wang Y.X."/>
            <person name="Bronner C."/>
            <person name="Chedin F."/>
            <person name="Arrowsmith C.H."/>
            <person name="Dhe-Paganon S."/>
        </authorList>
    </citation>
    <scope>X-RAY CRYSTALLOGRAPHY (2.4 ANGSTROMS) OF 126-285</scope>
    <scope>STRUCTURE BY NMR OF 126-285</scope>
    <scope>MUTAGENESIS OF ASP-142; ASP-145; PHE-152; GLU-153; TYR-188 AND ASP-190</scope>
</reference>
<reference key="47">
    <citation type="journal article" date="2011" name="Mol. Cell">
        <title>PHD finger recognition of unmodified histone H3R2 links UHRF1 to regulation of euchromatic gene expression.</title>
        <authorList>
            <person name="Rajakumara E."/>
            <person name="Wang Z."/>
            <person name="Ma H."/>
            <person name="Hu L."/>
            <person name="Chen H."/>
            <person name="Lin Y."/>
            <person name="Guo R."/>
            <person name="Wu F."/>
            <person name="Li H."/>
            <person name="Lan F."/>
            <person name="Shi Y.G."/>
            <person name="Xu Y."/>
            <person name="Patel D.J."/>
            <person name="Shi Y."/>
        </authorList>
    </citation>
    <scope>X-RAY CRYSTALLOGRAPHY (2.65 ANGSTROMS) OF 298-367 IN COMPLEX WITH ZINC AND HISTONE H3 PEPTIDE</scope>
    <scope>FUNCTION</scope>
    <scope>SUBCELLULAR LOCATION</scope>
    <scope>MUTAGENESIS OF 334-ASP-GLU-335</scope>
</reference>
<reference key="48">
    <citation type="journal article" date="2011" name="PLoS ONE">
        <title>The PHD finger of human UHRF1 reveals a new subgroup of unmethylated histone H3 tail readers.</title>
        <authorList>
            <person name="Lallous N."/>
            <person name="Legrand P."/>
            <person name="McEwen A.G."/>
            <person name="Ramon-Maiques S."/>
            <person name="Samama J.P."/>
            <person name="Birck C."/>
        </authorList>
    </citation>
    <scope>X-RAY CRYSTALLOGRAPHY (1.45 ANGSTROMS) OF 314-367</scope>
    <scope>MUTAGENESIS OF GLN-330; ASP-334 AND ASP-337</scope>
</reference>
<reference key="49">
    <citation type="journal article" date="2012" name="J. Mol. Biol.">
        <title>UHRF1 double tudor domain and the adjacent PHD finger act together to recognize K9me3-containing histone H3 tail.</title>
        <authorList>
            <person name="Xie S."/>
            <person name="Jakoncic J."/>
            <person name="Qian C."/>
        </authorList>
    </citation>
    <scope>X-RAY CRYSTALLOGRAPHY (1.95 ANGSTROMS) OF 299-364 IN COMPLEX WITH HISTONE H3 PEPTIDE</scope>
</reference>
<reference key="50">
    <citation type="journal article" date="2012" name="Proc. Natl. Acad. Sci. U.S.A.">
        <title>Recognition of modification status on a histone H3 tail by linked histone reader modules of the epigenetic regulator UHRF1.</title>
        <authorList>
            <person name="Arita K."/>
            <person name="Isogai S."/>
            <person name="Oda T."/>
            <person name="Unoki M."/>
            <person name="Sugita K."/>
            <person name="Sekiyama N."/>
            <person name="Kuwata K."/>
            <person name="Hamamoto R."/>
            <person name="Tochio H."/>
            <person name="Sato M."/>
            <person name="Ariyoshi M."/>
            <person name="Shirakawa M."/>
        </authorList>
    </citation>
    <scope>X-RAY CRYSTALLOGRAPHY (2.9 ANGSTROMS) OF 134-367 IN COMPLEX WITH ZINC AND HISTONE H3 PEPTIDE</scope>
    <scope>PHOSPHORYLATION AT SER-298</scope>
    <scope>MUTAGENESIS OF 295-ARG-ARG-296</scope>
</reference>
<sequence>MWIQVRTMDGRQTHTVDSLSRLTKVEELRRKIQELFHVEPGLQRLFYRGKQMEDGHTLFDYEVRLNDTIQLLVRQSLVLPHSTKERDSELSDTDSGCCLGQSESDKSSTHGEAAAETDSRPADEDMWDETELGLYKVNEYVDARDTNMGAWFEAQVVRVTRKAPSRDEPCSSTSRPALEEDVIYHVKYDDYPENGVVQMNSRDVRARARTIIKWQDLEVGQVVMLNYNPDNPKERGFWYDAEISRKRETRTARELYANVVLGDDSLNDCRIIFVDEVFKIERPGEGSPMVDNPMRRKSGPSCKHCKDDVNRLCRVCACHLCGGRQDPDKQLMCDECDMAFHIYCLDPPLSSVPSEDEWYCPECRNDASEVVLAGERLRESKKKAKMASATSSSQRDWGKGMACVGRTKECTIVPSNHYGPIPGIPVGTMWRFRVQVSESGVHRPHVAGIHGRSNDGAYSLVLAGGYEDDVDHGNFFTYTGSGGRDLSGNKRTAEQSCDQKLTNTNRALALNCFAPINDQEGAEAKDWRSGKPVRVVRNVKGGKNSKYAPAEGNRYDGIYKVVKYWPEKGKSGFLVWRYLLRRDDDEPGPWTKEGKDRIKKLGLTMQYPEGYLEALANREREKENSKREEEEQQEGGFASPRTGKGKWKRKSAGGGPSRAGSPRRTSKKTKVEPYSLTAQQSSLIREDKSNAKLWNEVLASLKDRPASGSPFQLFLSKVEETFQCICCQELVFRPITTVCQHNVCKDCLDRSFRAQVFSCPACRYDLGRSYAMQVNQPLQTVLNQLFPGYGNGR</sequence>